<dbReference type="EC" id="3.3.2.6" evidence="3 4 6 8 9 10 17 18"/>
<dbReference type="EC" id="3.4.11.4" evidence="2 3 13 16 19"/>
<dbReference type="EMBL" id="J03459">
    <property type="protein sequence ID" value="AAA36176.1"/>
    <property type="molecule type" value="mRNA"/>
</dbReference>
<dbReference type="EMBL" id="J02959">
    <property type="protein sequence ID" value="AAA36177.1"/>
    <property type="molecule type" value="mRNA"/>
</dbReference>
<dbReference type="EMBL" id="U27293">
    <property type="protein sequence ID" value="AAA89077.1"/>
    <property type="molecule type" value="Genomic_DNA"/>
</dbReference>
<dbReference type="EMBL" id="U27275">
    <property type="protein sequence ID" value="AAA89077.1"/>
    <property type="status" value="JOINED"/>
    <property type="molecule type" value="Genomic_DNA"/>
</dbReference>
<dbReference type="EMBL" id="U27276">
    <property type="protein sequence ID" value="AAA89077.1"/>
    <property type="status" value="JOINED"/>
    <property type="molecule type" value="Genomic_DNA"/>
</dbReference>
<dbReference type="EMBL" id="U27277">
    <property type="protein sequence ID" value="AAA89077.1"/>
    <property type="status" value="JOINED"/>
    <property type="molecule type" value="Genomic_DNA"/>
</dbReference>
<dbReference type="EMBL" id="U27278">
    <property type="protein sequence ID" value="AAA89077.1"/>
    <property type="status" value="JOINED"/>
    <property type="molecule type" value="Genomic_DNA"/>
</dbReference>
<dbReference type="EMBL" id="U27279">
    <property type="protein sequence ID" value="AAA89077.1"/>
    <property type="status" value="JOINED"/>
    <property type="molecule type" value="Genomic_DNA"/>
</dbReference>
<dbReference type="EMBL" id="U27280">
    <property type="protein sequence ID" value="AAA89077.1"/>
    <property type="status" value="JOINED"/>
    <property type="molecule type" value="Genomic_DNA"/>
</dbReference>
<dbReference type="EMBL" id="U27281">
    <property type="protein sequence ID" value="AAA89077.1"/>
    <property type="status" value="JOINED"/>
    <property type="molecule type" value="Genomic_DNA"/>
</dbReference>
<dbReference type="EMBL" id="U27282">
    <property type="protein sequence ID" value="AAA89077.1"/>
    <property type="status" value="JOINED"/>
    <property type="molecule type" value="Genomic_DNA"/>
</dbReference>
<dbReference type="EMBL" id="U27283">
    <property type="protein sequence ID" value="AAA89077.1"/>
    <property type="status" value="JOINED"/>
    <property type="molecule type" value="Genomic_DNA"/>
</dbReference>
<dbReference type="EMBL" id="U27284">
    <property type="protein sequence ID" value="AAA89077.1"/>
    <property type="status" value="JOINED"/>
    <property type="molecule type" value="Genomic_DNA"/>
</dbReference>
<dbReference type="EMBL" id="U27285">
    <property type="protein sequence ID" value="AAA89077.1"/>
    <property type="status" value="JOINED"/>
    <property type="molecule type" value="Genomic_DNA"/>
</dbReference>
<dbReference type="EMBL" id="U27286">
    <property type="protein sequence ID" value="AAA89077.1"/>
    <property type="status" value="JOINED"/>
    <property type="molecule type" value="Genomic_DNA"/>
</dbReference>
<dbReference type="EMBL" id="U27287">
    <property type="protein sequence ID" value="AAA89077.1"/>
    <property type="status" value="JOINED"/>
    <property type="molecule type" value="Genomic_DNA"/>
</dbReference>
<dbReference type="EMBL" id="U27288">
    <property type="protein sequence ID" value="AAA89077.1"/>
    <property type="status" value="JOINED"/>
    <property type="molecule type" value="Genomic_DNA"/>
</dbReference>
<dbReference type="EMBL" id="U27289">
    <property type="protein sequence ID" value="AAA89077.1"/>
    <property type="status" value="JOINED"/>
    <property type="molecule type" value="Genomic_DNA"/>
</dbReference>
<dbReference type="EMBL" id="U27290">
    <property type="protein sequence ID" value="AAA89077.1"/>
    <property type="status" value="JOINED"/>
    <property type="molecule type" value="Genomic_DNA"/>
</dbReference>
<dbReference type="EMBL" id="U27291">
    <property type="protein sequence ID" value="AAA89077.1"/>
    <property type="status" value="JOINED"/>
    <property type="molecule type" value="Genomic_DNA"/>
</dbReference>
<dbReference type="EMBL" id="U27292">
    <property type="protein sequence ID" value="AAA89077.1"/>
    <property type="status" value="JOINED"/>
    <property type="molecule type" value="Genomic_DNA"/>
</dbReference>
<dbReference type="EMBL" id="AK298017">
    <property type="protein sequence ID" value="BAG60321.1"/>
    <property type="molecule type" value="mRNA"/>
</dbReference>
<dbReference type="EMBL" id="CR457068">
    <property type="protein sequence ID" value="CAG33349.1"/>
    <property type="molecule type" value="mRNA"/>
</dbReference>
<dbReference type="EMBL" id="BX647158">
    <property type="status" value="NOT_ANNOTATED_CDS"/>
    <property type="molecule type" value="mRNA"/>
</dbReference>
<dbReference type="EMBL" id="AC007298">
    <property type="status" value="NOT_ANNOTATED_CDS"/>
    <property type="molecule type" value="Genomic_DNA"/>
</dbReference>
<dbReference type="EMBL" id="CH471054">
    <property type="protein sequence ID" value="EAW97559.1"/>
    <property type="molecule type" value="Genomic_DNA"/>
</dbReference>
<dbReference type="EMBL" id="BC032528">
    <property type="protein sequence ID" value="AAH32528.1"/>
    <property type="molecule type" value="mRNA"/>
</dbReference>
<dbReference type="EMBL" id="U43410">
    <property type="status" value="NOT_ANNOTATED_CDS"/>
    <property type="molecule type" value="Genomic_DNA"/>
</dbReference>
<dbReference type="EMBL" id="U43411">
    <property type="status" value="NOT_ANNOTATED_CDS"/>
    <property type="molecule type" value="Genomic_DNA"/>
</dbReference>
<dbReference type="CCDS" id="CCDS58266.1">
    <molecule id="P09960-3"/>
</dbReference>
<dbReference type="CCDS" id="CCDS58267.1">
    <molecule id="P09960-4"/>
</dbReference>
<dbReference type="CCDS" id="CCDS9059.1">
    <molecule id="P09960-1"/>
</dbReference>
<dbReference type="PIR" id="S65947">
    <property type="entry name" value="S65947"/>
</dbReference>
<dbReference type="RefSeq" id="NP_000886.1">
    <molecule id="P09960-1"/>
    <property type="nucleotide sequence ID" value="NM_000895.3"/>
</dbReference>
<dbReference type="RefSeq" id="NP_001243572.1">
    <molecule id="P09960-4"/>
    <property type="nucleotide sequence ID" value="NM_001256643.1"/>
</dbReference>
<dbReference type="RefSeq" id="NP_001243573.1">
    <molecule id="P09960-3"/>
    <property type="nucleotide sequence ID" value="NM_001256644.1"/>
</dbReference>
<dbReference type="RefSeq" id="NP_001401194.1">
    <molecule id="P09960-2"/>
    <property type="nucleotide sequence ID" value="NM_001414265.1"/>
</dbReference>
<dbReference type="RefSeq" id="XP_005268928.1">
    <property type="nucleotide sequence ID" value="XM_005268871.1"/>
</dbReference>
<dbReference type="PDB" id="1GW6">
    <property type="method" value="X-ray"/>
    <property type="resolution" value="2.20 A"/>
    <property type="chains" value="A=2-611"/>
</dbReference>
<dbReference type="PDB" id="1H19">
    <property type="method" value="X-ray"/>
    <property type="resolution" value="2.10 A"/>
    <property type="chains" value="A=2-611"/>
</dbReference>
<dbReference type="PDB" id="1HS6">
    <property type="method" value="X-ray"/>
    <property type="resolution" value="1.95 A"/>
    <property type="chains" value="A=1-611"/>
</dbReference>
<dbReference type="PDB" id="1SQM">
    <property type="method" value="X-ray"/>
    <property type="resolution" value="2.30 A"/>
    <property type="chains" value="A=2-611"/>
</dbReference>
<dbReference type="PDB" id="2R59">
    <property type="method" value="X-ray"/>
    <property type="resolution" value="1.89 A"/>
    <property type="chains" value="A=2-611"/>
</dbReference>
<dbReference type="PDB" id="2VJ8">
    <property type="method" value="X-ray"/>
    <property type="resolution" value="1.80 A"/>
    <property type="chains" value="A=1-611"/>
</dbReference>
<dbReference type="PDB" id="3B7R">
    <property type="method" value="X-ray"/>
    <property type="resolution" value="1.81 A"/>
    <property type="chains" value="L=2-611"/>
</dbReference>
<dbReference type="PDB" id="3B7S">
    <property type="method" value="X-ray"/>
    <property type="resolution" value="1.47 A"/>
    <property type="chains" value="A=2-611"/>
</dbReference>
<dbReference type="PDB" id="3B7T">
    <property type="method" value="X-ray"/>
    <property type="resolution" value="2.30 A"/>
    <property type="chains" value="A=2-611"/>
</dbReference>
<dbReference type="PDB" id="3B7U">
    <property type="method" value="X-ray"/>
    <property type="resolution" value="1.90 A"/>
    <property type="chains" value="X=2-611"/>
</dbReference>
<dbReference type="PDB" id="3CHO">
    <property type="method" value="X-ray"/>
    <property type="resolution" value="1.80 A"/>
    <property type="chains" value="A=2-611"/>
</dbReference>
<dbReference type="PDB" id="3CHP">
    <property type="method" value="X-ray"/>
    <property type="resolution" value="2.10 A"/>
    <property type="chains" value="A=2-611"/>
</dbReference>
<dbReference type="PDB" id="3CHQ">
    <property type="method" value="X-ray"/>
    <property type="resolution" value="2.09 A"/>
    <property type="chains" value="A=2-611"/>
</dbReference>
<dbReference type="PDB" id="3CHR">
    <property type="method" value="X-ray"/>
    <property type="resolution" value="2.20 A"/>
    <property type="chains" value="A=2-611"/>
</dbReference>
<dbReference type="PDB" id="3CHS">
    <property type="method" value="X-ray"/>
    <property type="resolution" value="2.55 A"/>
    <property type="chains" value="A=2-611"/>
</dbReference>
<dbReference type="PDB" id="3FH5">
    <property type="method" value="X-ray"/>
    <property type="resolution" value="1.63 A"/>
    <property type="chains" value="A=1-611"/>
</dbReference>
<dbReference type="PDB" id="3FH7">
    <property type="method" value="X-ray"/>
    <property type="resolution" value="2.05 A"/>
    <property type="chains" value="A=1-611"/>
</dbReference>
<dbReference type="PDB" id="3FH8">
    <property type="method" value="X-ray"/>
    <property type="resolution" value="1.67 A"/>
    <property type="chains" value="A=1-611"/>
</dbReference>
<dbReference type="PDB" id="3FHE">
    <property type="method" value="X-ray"/>
    <property type="resolution" value="2.16 A"/>
    <property type="chains" value="A=1-611"/>
</dbReference>
<dbReference type="PDB" id="3FTS">
    <property type="method" value="X-ray"/>
    <property type="resolution" value="2.33 A"/>
    <property type="chains" value="A=1-611"/>
</dbReference>
<dbReference type="PDB" id="3FTU">
    <property type="method" value="X-ray"/>
    <property type="resolution" value="1.90 A"/>
    <property type="chains" value="A=1-611"/>
</dbReference>
<dbReference type="PDB" id="3FTV">
    <property type="method" value="X-ray"/>
    <property type="resolution" value="1.70 A"/>
    <property type="chains" value="A=1-611"/>
</dbReference>
<dbReference type="PDB" id="3FTW">
    <property type="method" value="X-ray"/>
    <property type="resolution" value="1.85 A"/>
    <property type="chains" value="A=1-611"/>
</dbReference>
<dbReference type="PDB" id="3FTX">
    <property type="method" value="X-ray"/>
    <property type="resolution" value="1.96 A"/>
    <property type="chains" value="A=1-611"/>
</dbReference>
<dbReference type="PDB" id="3FTY">
    <property type="method" value="X-ray"/>
    <property type="resolution" value="2.15 A"/>
    <property type="chains" value="A=1-611"/>
</dbReference>
<dbReference type="PDB" id="3FTZ">
    <property type="method" value="X-ray"/>
    <property type="resolution" value="2.00 A"/>
    <property type="chains" value="A=1-611"/>
</dbReference>
<dbReference type="PDB" id="3FU0">
    <property type="method" value="X-ray"/>
    <property type="resolution" value="1.80 A"/>
    <property type="chains" value="A=1-611"/>
</dbReference>
<dbReference type="PDB" id="3FU3">
    <property type="method" value="X-ray"/>
    <property type="resolution" value="2.00 A"/>
    <property type="chains" value="A=1-611"/>
</dbReference>
<dbReference type="PDB" id="3FU5">
    <property type="method" value="X-ray"/>
    <property type="resolution" value="2.30 A"/>
    <property type="chains" value="A=1-611"/>
</dbReference>
<dbReference type="PDB" id="3FU6">
    <property type="method" value="X-ray"/>
    <property type="resolution" value="2.05 A"/>
    <property type="chains" value="A=1-611"/>
</dbReference>
<dbReference type="PDB" id="3FUD">
    <property type="method" value="X-ray"/>
    <property type="resolution" value="2.20 A"/>
    <property type="chains" value="A=1-611"/>
</dbReference>
<dbReference type="PDB" id="3FUE">
    <property type="method" value="X-ray"/>
    <property type="resolution" value="2.38 A"/>
    <property type="chains" value="A=1-611"/>
</dbReference>
<dbReference type="PDB" id="3FUF">
    <property type="method" value="X-ray"/>
    <property type="resolution" value="2.60 A"/>
    <property type="chains" value="A=1-611"/>
</dbReference>
<dbReference type="PDB" id="3FUH">
    <property type="method" value="X-ray"/>
    <property type="resolution" value="1.80 A"/>
    <property type="chains" value="A=1-611"/>
</dbReference>
<dbReference type="PDB" id="3FUI">
    <property type="method" value="X-ray"/>
    <property type="resolution" value="2.20 A"/>
    <property type="chains" value="A=1-611"/>
</dbReference>
<dbReference type="PDB" id="3FUJ">
    <property type="method" value="X-ray"/>
    <property type="resolution" value="1.90 A"/>
    <property type="chains" value="A=1-611"/>
</dbReference>
<dbReference type="PDB" id="3FUK">
    <property type="method" value="X-ray"/>
    <property type="resolution" value="1.95 A"/>
    <property type="chains" value="A=1-611"/>
</dbReference>
<dbReference type="PDB" id="3FUL">
    <property type="method" value="X-ray"/>
    <property type="resolution" value="2.39 A"/>
    <property type="chains" value="A=1-611"/>
</dbReference>
<dbReference type="PDB" id="3FUM">
    <property type="method" value="X-ray"/>
    <property type="resolution" value="2.15 A"/>
    <property type="chains" value="A=1-611"/>
</dbReference>
<dbReference type="PDB" id="3FUN">
    <property type="method" value="X-ray"/>
    <property type="resolution" value="1.58 A"/>
    <property type="chains" value="A=1-611"/>
</dbReference>
<dbReference type="PDB" id="3U9W">
    <property type="method" value="X-ray"/>
    <property type="resolution" value="1.25 A"/>
    <property type="chains" value="A=4-611"/>
</dbReference>
<dbReference type="PDB" id="4DPR">
    <property type="method" value="X-ray"/>
    <property type="resolution" value="2.02 A"/>
    <property type="chains" value="A=1-611"/>
</dbReference>
<dbReference type="PDB" id="4L2L">
    <property type="method" value="X-ray"/>
    <property type="resolution" value="1.65 A"/>
    <property type="chains" value="A=1-611"/>
</dbReference>
<dbReference type="PDB" id="4MKT">
    <property type="method" value="X-ray"/>
    <property type="resolution" value="1.62 A"/>
    <property type="chains" value="A=1-611"/>
</dbReference>
<dbReference type="PDB" id="4MS6">
    <property type="method" value="X-ray"/>
    <property type="resolution" value="1.72 A"/>
    <property type="chains" value="A=1-611"/>
</dbReference>
<dbReference type="PDB" id="4R7L">
    <property type="method" value="X-ray"/>
    <property type="resolution" value="1.66 A"/>
    <property type="chains" value="A=1-611"/>
</dbReference>
<dbReference type="PDB" id="4RSY">
    <property type="method" value="X-ray"/>
    <property type="resolution" value="1.93 A"/>
    <property type="chains" value="A=1-611"/>
</dbReference>
<dbReference type="PDB" id="4RVB">
    <property type="method" value="X-ray"/>
    <property type="resolution" value="1.93 A"/>
    <property type="chains" value="A=1-611"/>
</dbReference>
<dbReference type="PDB" id="5AEN">
    <property type="method" value="X-ray"/>
    <property type="resolution" value="1.86 A"/>
    <property type="chains" value="A=4-611"/>
</dbReference>
<dbReference type="PDB" id="5BPP">
    <property type="method" value="X-ray"/>
    <property type="resolution" value="2.03 A"/>
    <property type="chains" value="A=1-611"/>
</dbReference>
<dbReference type="PDB" id="5FWQ">
    <property type="method" value="X-ray"/>
    <property type="resolution" value="2.05 A"/>
    <property type="chains" value="A=1-611"/>
</dbReference>
<dbReference type="PDB" id="5N3W">
    <property type="method" value="X-ray"/>
    <property type="resolution" value="2.30 A"/>
    <property type="chains" value="A=1-611"/>
</dbReference>
<dbReference type="PDB" id="5NI2">
    <property type="method" value="X-ray"/>
    <property type="resolution" value="1.50 A"/>
    <property type="chains" value="A=2-611"/>
</dbReference>
<dbReference type="PDB" id="5NI4">
    <property type="method" value="X-ray"/>
    <property type="resolution" value="1.90 A"/>
    <property type="chains" value="A/B/C=2-611"/>
</dbReference>
<dbReference type="PDB" id="5NI6">
    <property type="method" value="X-ray"/>
    <property type="resolution" value="1.54 A"/>
    <property type="chains" value="A=2-611"/>
</dbReference>
<dbReference type="PDB" id="5NIA">
    <property type="method" value="X-ray"/>
    <property type="resolution" value="1.76 A"/>
    <property type="chains" value="A=2-611"/>
</dbReference>
<dbReference type="PDB" id="5NID">
    <property type="method" value="X-ray"/>
    <property type="resolution" value="1.57 A"/>
    <property type="chains" value="A=2-611"/>
</dbReference>
<dbReference type="PDB" id="5NIE">
    <property type="method" value="X-ray"/>
    <property type="resolution" value="2.60 A"/>
    <property type="chains" value="A/B/C=2-611"/>
</dbReference>
<dbReference type="PDB" id="6ENB">
    <property type="method" value="X-ray"/>
    <property type="resolution" value="1.84 A"/>
    <property type="chains" value="A=2-611"/>
</dbReference>
<dbReference type="PDB" id="6ENC">
    <property type="method" value="X-ray"/>
    <property type="resolution" value="1.95 A"/>
    <property type="chains" value="A=2-611"/>
</dbReference>
<dbReference type="PDB" id="6END">
    <property type="method" value="X-ray"/>
    <property type="resolution" value="2.24 A"/>
    <property type="chains" value="A=2-611"/>
</dbReference>
<dbReference type="PDB" id="6O5H">
    <property type="method" value="X-ray"/>
    <property type="resolution" value="2.84 A"/>
    <property type="chains" value="A/B/C=4-611"/>
</dbReference>
<dbReference type="PDB" id="7AUZ">
    <property type="method" value="X-ray"/>
    <property type="resolution" value="1.90 A"/>
    <property type="chains" value="A=2-611"/>
</dbReference>
<dbReference type="PDB" id="7AV0">
    <property type="method" value="X-ray"/>
    <property type="resolution" value="1.90 A"/>
    <property type="chains" value="A=2-611"/>
</dbReference>
<dbReference type="PDB" id="7AV1">
    <property type="method" value="X-ray"/>
    <property type="resolution" value="1.79 A"/>
    <property type="chains" value="A=2-611"/>
</dbReference>
<dbReference type="PDB" id="7AV2">
    <property type="method" value="X-ray"/>
    <property type="resolution" value="1.95 A"/>
    <property type="chains" value="A=2-611"/>
</dbReference>
<dbReference type="PDB" id="7KZE">
    <property type="method" value="X-ray"/>
    <property type="resolution" value="2.90 A"/>
    <property type="chains" value="A/B/C=4-611"/>
</dbReference>
<dbReference type="PDB" id="7LLQ">
    <property type="method" value="X-ray"/>
    <property type="resolution" value="2.85 A"/>
    <property type="chains" value="A/B/C=1-611"/>
</dbReference>
<dbReference type="PDB" id="8AVA">
    <property type="method" value="X-ray"/>
    <property type="resolution" value="1.35 A"/>
    <property type="chains" value="A=2-611"/>
</dbReference>
<dbReference type="PDB" id="8AWH">
    <property type="method" value="X-ray"/>
    <property type="resolution" value="1.42 A"/>
    <property type="chains" value="A=2-611"/>
</dbReference>
<dbReference type="PDB" id="8QOW">
    <property type="method" value="X-ray"/>
    <property type="resolution" value="2.35 A"/>
    <property type="chains" value="A=2-611"/>
</dbReference>
<dbReference type="PDB" id="8QPN">
    <property type="method" value="X-ray"/>
    <property type="resolution" value="2.00 A"/>
    <property type="chains" value="A=2-611"/>
</dbReference>
<dbReference type="PDB" id="8QQ4">
    <property type="method" value="X-ray"/>
    <property type="resolution" value="1.60 A"/>
    <property type="chains" value="A=2-611"/>
</dbReference>
<dbReference type="PDB" id="8RX3">
    <property type="method" value="X-ray"/>
    <property type="resolution" value="1.85 A"/>
    <property type="chains" value="A=2-611"/>
</dbReference>
<dbReference type="PDB" id="8RX7">
    <property type="method" value="X-ray"/>
    <property type="resolution" value="1.85 A"/>
    <property type="chains" value="A=2-611"/>
</dbReference>
<dbReference type="PDB" id="8RX9">
    <property type="method" value="X-ray"/>
    <property type="resolution" value="2.90 A"/>
    <property type="chains" value="A=2-611"/>
</dbReference>
<dbReference type="PDB" id="8TWX">
    <property type="method" value="X-ray"/>
    <property type="resolution" value="2.70 A"/>
    <property type="chains" value="A/B/C=5-611"/>
</dbReference>
<dbReference type="PDBsum" id="1GW6"/>
<dbReference type="PDBsum" id="1H19"/>
<dbReference type="PDBsum" id="1HS6"/>
<dbReference type="PDBsum" id="1SQM"/>
<dbReference type="PDBsum" id="2R59"/>
<dbReference type="PDBsum" id="2VJ8"/>
<dbReference type="PDBsum" id="3B7R"/>
<dbReference type="PDBsum" id="3B7S"/>
<dbReference type="PDBsum" id="3B7T"/>
<dbReference type="PDBsum" id="3B7U"/>
<dbReference type="PDBsum" id="3CHO"/>
<dbReference type="PDBsum" id="3CHP"/>
<dbReference type="PDBsum" id="3CHQ"/>
<dbReference type="PDBsum" id="3CHR"/>
<dbReference type="PDBsum" id="3CHS"/>
<dbReference type="PDBsum" id="3FH5"/>
<dbReference type="PDBsum" id="3FH7"/>
<dbReference type="PDBsum" id="3FH8"/>
<dbReference type="PDBsum" id="3FHE"/>
<dbReference type="PDBsum" id="3FTS"/>
<dbReference type="PDBsum" id="3FTU"/>
<dbReference type="PDBsum" id="3FTV"/>
<dbReference type="PDBsum" id="3FTW"/>
<dbReference type="PDBsum" id="3FTX"/>
<dbReference type="PDBsum" id="3FTY"/>
<dbReference type="PDBsum" id="3FTZ"/>
<dbReference type="PDBsum" id="3FU0"/>
<dbReference type="PDBsum" id="3FU3"/>
<dbReference type="PDBsum" id="3FU5"/>
<dbReference type="PDBsum" id="3FU6"/>
<dbReference type="PDBsum" id="3FUD"/>
<dbReference type="PDBsum" id="3FUE"/>
<dbReference type="PDBsum" id="3FUF"/>
<dbReference type="PDBsum" id="3FUH"/>
<dbReference type="PDBsum" id="3FUI"/>
<dbReference type="PDBsum" id="3FUJ"/>
<dbReference type="PDBsum" id="3FUK"/>
<dbReference type="PDBsum" id="3FUL"/>
<dbReference type="PDBsum" id="3FUM"/>
<dbReference type="PDBsum" id="3FUN"/>
<dbReference type="PDBsum" id="3U9W"/>
<dbReference type="PDBsum" id="4DPR"/>
<dbReference type="PDBsum" id="4L2L"/>
<dbReference type="PDBsum" id="4MKT"/>
<dbReference type="PDBsum" id="4MS6"/>
<dbReference type="PDBsum" id="4R7L"/>
<dbReference type="PDBsum" id="4RSY"/>
<dbReference type="PDBsum" id="4RVB"/>
<dbReference type="PDBsum" id="5AEN"/>
<dbReference type="PDBsum" id="5BPP"/>
<dbReference type="PDBsum" id="5FWQ"/>
<dbReference type="PDBsum" id="5N3W"/>
<dbReference type="PDBsum" id="5NI2"/>
<dbReference type="PDBsum" id="5NI4"/>
<dbReference type="PDBsum" id="5NI6"/>
<dbReference type="PDBsum" id="5NIA"/>
<dbReference type="PDBsum" id="5NID"/>
<dbReference type="PDBsum" id="5NIE"/>
<dbReference type="PDBsum" id="6ENB"/>
<dbReference type="PDBsum" id="6ENC"/>
<dbReference type="PDBsum" id="6END"/>
<dbReference type="PDBsum" id="6O5H"/>
<dbReference type="PDBsum" id="7AUZ"/>
<dbReference type="PDBsum" id="7AV0"/>
<dbReference type="PDBsum" id="7AV1"/>
<dbReference type="PDBsum" id="7AV2"/>
<dbReference type="PDBsum" id="7KZE"/>
<dbReference type="PDBsum" id="7LLQ"/>
<dbReference type="PDBsum" id="8AVA"/>
<dbReference type="PDBsum" id="8AWH"/>
<dbReference type="PDBsum" id="8QOW"/>
<dbReference type="PDBsum" id="8QPN"/>
<dbReference type="PDBsum" id="8QQ4"/>
<dbReference type="PDBsum" id="8RX3"/>
<dbReference type="PDBsum" id="8RX7"/>
<dbReference type="PDBsum" id="8RX9"/>
<dbReference type="PDBsum" id="8TWX"/>
<dbReference type="SMR" id="P09960"/>
<dbReference type="BioGRID" id="110226">
    <property type="interactions" value="63"/>
</dbReference>
<dbReference type="FunCoup" id="P09960">
    <property type="interactions" value="2203"/>
</dbReference>
<dbReference type="IntAct" id="P09960">
    <property type="interactions" value="15"/>
</dbReference>
<dbReference type="MINT" id="P09960"/>
<dbReference type="STRING" id="9606.ENSP00000228740"/>
<dbReference type="BindingDB" id="P09960"/>
<dbReference type="ChEMBL" id="CHEMBL4618"/>
<dbReference type="DrugBank" id="DB07102">
    <property type="generic name" value="(2S)-2-amino-5-oxo-5-[(4-phenylmethoxyphenyl)amino]pentanoic acid"/>
</dbReference>
<dbReference type="DrugBank" id="DB06917">
    <property type="generic name" value="(4-fluorophenyl)(pyridin-4-yl)methanone"/>
</dbReference>
<dbReference type="DrugBank" id="DB07258">
    <property type="generic name" value="(R)-pyridin-4-yl[4-(2-pyrrolidin-1-ylethoxy)phenyl]methanol"/>
</dbReference>
<dbReference type="DrugBank" id="DB07094">
    <property type="generic name" value="1-(2,2'-bithiophen-5-yl)methanamine"/>
</dbReference>
<dbReference type="DrugBank" id="DB07259">
    <property type="generic name" value="1-(4-thiophen-2-ylphenyl)methanamine"/>
</dbReference>
<dbReference type="DrugBank" id="DB02352">
    <property type="generic name" value="3-(Benzyloxy)Pyridin-2-Amine"/>
</dbReference>
<dbReference type="DrugBank" id="DB07292">
    <property type="generic name" value="4-(2-amino-1,3-thiazol-4-yl)phenol"/>
</dbReference>
<dbReference type="DrugBank" id="DB07104">
    <property type="generic name" value="4-amino-N-[4-(benzyloxy)phenyl]butanamide"/>
</dbReference>
<dbReference type="DrugBank" id="DB06828">
    <property type="generic name" value="5-[2-(1H-pyrrol-1-yl)ethoxy]-1H-indole"/>
</dbReference>
<dbReference type="DrugBank" id="DB08466">
    <property type="generic name" value="5-[2-(4-hydroxyphenyl)ethyl]benzene-1,3-diol"/>
</dbReference>
<dbReference type="DrugBank" id="DB15385">
    <property type="generic name" value="Acebilustat"/>
</dbReference>
<dbReference type="DrugBank" id="DB14511">
    <property type="generic name" value="Acetate"/>
</dbReference>
<dbReference type="DrugBank" id="DB01197">
    <property type="generic name" value="Captopril"/>
</dbReference>
<dbReference type="DrugBank" id="DB05177">
    <property type="generic name" value="DG051"/>
</dbReference>
<dbReference type="DrugBank" id="DB03366">
    <property type="generic name" value="Imidazole"/>
</dbReference>
<dbReference type="DrugBank" id="DB08040">
    <property type="generic name" value="Kelatorphan"/>
</dbReference>
<dbReference type="DrugBank" id="DB06851">
    <property type="generic name" value="N-(pyridin-3-ylmethyl)aniline"/>
</dbReference>
<dbReference type="DrugBank" id="DB02062">
    <property type="generic name" value="N-[3-[(1-Aminoethyl)(Hydroxy)Phosphoryl]-2-(1,1'-Biphenyl-4-Ylmethyl)Propanoyl]Alanine"/>
</dbReference>
<dbReference type="DrugBank" id="DB07099">
    <property type="generic name" value="N-[4-(benzyloxy)phenyl]glycinamide"/>
</dbReference>
<dbReference type="DrugBank" id="DB07260">
    <property type="generic name" value="N-benzyl-4-[(2R)-pyrrolidin-2-ylmethoxy]aniline"/>
</dbReference>
<dbReference type="DrugBank" id="DB07196">
    <property type="generic name" value="N-methyl-1-(2-thiophen-2-ylphenyl)methanamine"/>
</dbReference>
<dbReference type="DrugBank" id="DB11781">
    <property type="generic name" value="Tosedostat"/>
</dbReference>
<dbReference type="DrugBank" id="DB03424">
    <property type="generic name" value="Ubenimex"/>
</dbReference>
<dbReference type="DrugBank" id="DB07237">
    <property type="generic name" value="{4-[(2R)-pyrrolidin-2-ylmethoxy]phenyl}(4-thiophen-3-ylphenyl)methanone"/>
</dbReference>
<dbReference type="DrugCentral" id="P09960"/>
<dbReference type="GuidetoPHARMACOLOGY" id="1395"/>
<dbReference type="SwissLipids" id="SLP:000001118"/>
<dbReference type="MEROPS" id="M01.004"/>
<dbReference type="MoonProt" id="P09960"/>
<dbReference type="GlyCosmos" id="P09960">
    <property type="glycosylation" value="2 sites, 1 glycan"/>
</dbReference>
<dbReference type="GlyGen" id="P09960">
    <property type="glycosylation" value="3 sites, 1 N-linked glycan (1 site), 1 O-linked glycan (2 sites)"/>
</dbReference>
<dbReference type="iPTMnet" id="P09960"/>
<dbReference type="MetOSite" id="P09960"/>
<dbReference type="PhosphoSitePlus" id="P09960"/>
<dbReference type="SwissPalm" id="P09960"/>
<dbReference type="BioMuta" id="LTA4H"/>
<dbReference type="DMDM" id="126353"/>
<dbReference type="REPRODUCTION-2DPAGE" id="IPI00219077"/>
<dbReference type="CPTAC" id="CPTAC-92"/>
<dbReference type="CPTAC" id="CPTAC-93"/>
<dbReference type="jPOST" id="P09960"/>
<dbReference type="MassIVE" id="P09960"/>
<dbReference type="PaxDb" id="9606-ENSP00000228740"/>
<dbReference type="PeptideAtlas" id="P09960"/>
<dbReference type="PRIDE" id="P09960"/>
<dbReference type="ProteomicsDB" id="28779"/>
<dbReference type="ProteomicsDB" id="52284">
    <molecule id="P09960-1"/>
</dbReference>
<dbReference type="ProteomicsDB" id="52285">
    <molecule id="P09960-2"/>
</dbReference>
<dbReference type="ProteomicsDB" id="52286">
    <molecule id="P09960-3"/>
</dbReference>
<dbReference type="Pumba" id="P09960"/>
<dbReference type="Antibodypedia" id="4453">
    <property type="antibodies" value="555 antibodies from 38 providers"/>
</dbReference>
<dbReference type="DNASU" id="4048"/>
<dbReference type="Ensembl" id="ENST00000228740.7">
    <molecule id="P09960-1"/>
    <property type="protein sequence ID" value="ENSP00000228740.2"/>
    <property type="gene ID" value="ENSG00000111144.10"/>
</dbReference>
<dbReference type="Ensembl" id="ENST00000413268.6">
    <molecule id="P09960-3"/>
    <property type="protein sequence ID" value="ENSP00000395051.2"/>
    <property type="gene ID" value="ENSG00000111144.10"/>
</dbReference>
<dbReference type="Ensembl" id="ENST00000552789.5">
    <molecule id="P09960-4"/>
    <property type="protein sequence ID" value="ENSP00000449958.1"/>
    <property type="gene ID" value="ENSG00000111144.10"/>
</dbReference>
<dbReference type="GeneID" id="4048"/>
<dbReference type="KEGG" id="hsa:4048"/>
<dbReference type="MANE-Select" id="ENST00000228740.7">
    <property type="protein sequence ID" value="ENSP00000228740.2"/>
    <property type="RefSeq nucleotide sequence ID" value="NM_000895.3"/>
    <property type="RefSeq protein sequence ID" value="NP_000886.1"/>
</dbReference>
<dbReference type="UCSC" id="uc001ten.3">
    <molecule id="P09960-1"/>
    <property type="organism name" value="human"/>
</dbReference>
<dbReference type="AGR" id="HGNC:6710"/>
<dbReference type="CTD" id="4048"/>
<dbReference type="DisGeNET" id="4048"/>
<dbReference type="GeneCards" id="LTA4H"/>
<dbReference type="HGNC" id="HGNC:6710">
    <property type="gene designation" value="LTA4H"/>
</dbReference>
<dbReference type="HPA" id="ENSG00000111144">
    <property type="expression patterns" value="Low tissue specificity"/>
</dbReference>
<dbReference type="MIM" id="151570">
    <property type="type" value="gene"/>
</dbReference>
<dbReference type="neXtProt" id="NX_P09960"/>
<dbReference type="OpenTargets" id="ENSG00000111144"/>
<dbReference type="PharmGKB" id="PA24345"/>
<dbReference type="VEuPathDB" id="HostDB:ENSG00000111144"/>
<dbReference type="eggNOG" id="KOG1047">
    <property type="taxonomic scope" value="Eukaryota"/>
</dbReference>
<dbReference type="GeneTree" id="ENSGT00940000156375"/>
<dbReference type="HOGENOM" id="CLU_014505_0_0_1"/>
<dbReference type="InParanoid" id="P09960"/>
<dbReference type="OMA" id="CTALQWM"/>
<dbReference type="OrthoDB" id="79562at2759"/>
<dbReference type="PAN-GO" id="P09960">
    <property type="GO annotations" value="7 GO annotations based on evolutionary models"/>
</dbReference>
<dbReference type="PhylomeDB" id="P09960"/>
<dbReference type="TreeFam" id="TF300758"/>
<dbReference type="BioCyc" id="MetaCyc:HS03372-MONOMER"/>
<dbReference type="BRENDA" id="3.3.2.6">
    <property type="organism ID" value="2681"/>
</dbReference>
<dbReference type="BRENDA" id="3.4.11.6">
    <property type="organism ID" value="2681"/>
</dbReference>
<dbReference type="PathwayCommons" id="P09960"/>
<dbReference type="Reactome" id="R-HSA-2142691">
    <property type="pathway name" value="Synthesis of Leukotrienes (LT) and Eoxins (EX)"/>
</dbReference>
<dbReference type="Reactome" id="R-HSA-6798695">
    <property type="pathway name" value="Neutrophil degranulation"/>
</dbReference>
<dbReference type="Reactome" id="R-HSA-9018676">
    <property type="pathway name" value="Biosynthesis of D-series resolvins"/>
</dbReference>
<dbReference type="Reactome" id="R-HSA-9018681">
    <property type="pathway name" value="Biosynthesis of protectins"/>
</dbReference>
<dbReference type="Reactome" id="R-HSA-9018896">
    <property type="pathway name" value="Biosynthesis of E-series 18(S)-resolvins"/>
</dbReference>
<dbReference type="Reactome" id="R-HSA-9020265">
    <property type="pathway name" value="Biosynthesis of aspirin-triggered D-series resolvins"/>
</dbReference>
<dbReference type="Reactome" id="R-HSA-9023661">
    <property type="pathway name" value="Biosynthesis of E-series 18(R)-resolvins"/>
</dbReference>
<dbReference type="SABIO-RK" id="P09960"/>
<dbReference type="SignaLink" id="P09960"/>
<dbReference type="UniPathway" id="UPA00878"/>
<dbReference type="BioGRID-ORCS" id="4048">
    <property type="hits" value="9 hits in 1164 CRISPR screens"/>
</dbReference>
<dbReference type="ChiTaRS" id="LTA4H">
    <property type="organism name" value="human"/>
</dbReference>
<dbReference type="EvolutionaryTrace" id="P09960"/>
<dbReference type="GenomeRNAi" id="4048"/>
<dbReference type="Pharos" id="P09960">
    <property type="development level" value="Tchem"/>
</dbReference>
<dbReference type="PRO" id="PR:P09960"/>
<dbReference type="Proteomes" id="UP000005640">
    <property type="component" value="Chromosome 12"/>
</dbReference>
<dbReference type="RNAct" id="P09960">
    <property type="molecule type" value="protein"/>
</dbReference>
<dbReference type="Bgee" id="ENSG00000111144">
    <property type="expression patterns" value="Expressed in monocyte and 208 other cell types or tissues"/>
</dbReference>
<dbReference type="ExpressionAtlas" id="P09960">
    <property type="expression patterns" value="baseline and differential"/>
</dbReference>
<dbReference type="GO" id="GO:0005829">
    <property type="term" value="C:cytosol"/>
    <property type="evidence" value="ECO:0000314"/>
    <property type="project" value="HPA"/>
</dbReference>
<dbReference type="GO" id="GO:0070062">
    <property type="term" value="C:extracellular exosome"/>
    <property type="evidence" value="ECO:0007005"/>
    <property type="project" value="UniProtKB"/>
</dbReference>
<dbReference type="GO" id="GO:0005576">
    <property type="term" value="C:extracellular region"/>
    <property type="evidence" value="ECO:0000304"/>
    <property type="project" value="Reactome"/>
</dbReference>
<dbReference type="GO" id="GO:1904813">
    <property type="term" value="C:ficolin-1-rich granule lumen"/>
    <property type="evidence" value="ECO:0000304"/>
    <property type="project" value="Reactome"/>
</dbReference>
<dbReference type="GO" id="GO:0005654">
    <property type="term" value="C:nucleoplasm"/>
    <property type="evidence" value="ECO:0000314"/>
    <property type="project" value="HPA"/>
</dbReference>
<dbReference type="GO" id="GO:0005634">
    <property type="term" value="C:nucleus"/>
    <property type="evidence" value="ECO:0000318"/>
    <property type="project" value="GO_Central"/>
</dbReference>
<dbReference type="GO" id="GO:1904724">
    <property type="term" value="C:tertiary granule lumen"/>
    <property type="evidence" value="ECO:0000304"/>
    <property type="project" value="Reactome"/>
</dbReference>
<dbReference type="GO" id="GO:0004177">
    <property type="term" value="F:aminopeptidase activity"/>
    <property type="evidence" value="ECO:0000314"/>
    <property type="project" value="UniProtKB"/>
</dbReference>
<dbReference type="GO" id="GO:0004301">
    <property type="term" value="F:epoxide hydrolase activity"/>
    <property type="evidence" value="ECO:0000314"/>
    <property type="project" value="UniProtKB"/>
</dbReference>
<dbReference type="GO" id="GO:0004463">
    <property type="term" value="F:leukotriene-A4 hydrolase activity"/>
    <property type="evidence" value="ECO:0000314"/>
    <property type="project" value="UniProtKB"/>
</dbReference>
<dbReference type="GO" id="GO:0070006">
    <property type="term" value="F:metalloaminopeptidase activity"/>
    <property type="evidence" value="ECO:0000315"/>
    <property type="project" value="CAFA"/>
</dbReference>
<dbReference type="GO" id="GO:0008233">
    <property type="term" value="F:peptidase activity"/>
    <property type="evidence" value="ECO:0000304"/>
    <property type="project" value="ProtInc"/>
</dbReference>
<dbReference type="GO" id="GO:0003723">
    <property type="term" value="F:RNA binding"/>
    <property type="evidence" value="ECO:0007005"/>
    <property type="project" value="UniProtKB"/>
</dbReference>
<dbReference type="GO" id="GO:0045148">
    <property type="term" value="F:tripeptide aminopeptidase activity"/>
    <property type="evidence" value="ECO:0007669"/>
    <property type="project" value="UniProtKB-EC"/>
</dbReference>
<dbReference type="GO" id="GO:0008270">
    <property type="term" value="F:zinc ion binding"/>
    <property type="evidence" value="ECO:0000314"/>
    <property type="project" value="UniProtKB"/>
</dbReference>
<dbReference type="GO" id="GO:0019370">
    <property type="term" value="P:leukotriene biosynthetic process"/>
    <property type="evidence" value="ECO:0000314"/>
    <property type="project" value="UniProtKB"/>
</dbReference>
<dbReference type="GO" id="GO:0006629">
    <property type="term" value="P:lipid metabolic process"/>
    <property type="evidence" value="ECO:0007669"/>
    <property type="project" value="UniProtKB-KW"/>
</dbReference>
<dbReference type="GO" id="GO:0043171">
    <property type="term" value="P:peptide catabolic process"/>
    <property type="evidence" value="ECO:0000314"/>
    <property type="project" value="UniProtKB"/>
</dbReference>
<dbReference type="GO" id="GO:0019538">
    <property type="term" value="P:protein metabolic process"/>
    <property type="evidence" value="ECO:0000315"/>
    <property type="project" value="CAFA"/>
</dbReference>
<dbReference type="GO" id="GO:0006508">
    <property type="term" value="P:proteolysis"/>
    <property type="evidence" value="ECO:0007669"/>
    <property type="project" value="UniProtKB-KW"/>
</dbReference>
<dbReference type="GO" id="GO:0043434">
    <property type="term" value="P:response to peptide hormone"/>
    <property type="evidence" value="ECO:0007669"/>
    <property type="project" value="Ensembl"/>
</dbReference>
<dbReference type="GO" id="GO:0010043">
    <property type="term" value="P:response to zinc ion"/>
    <property type="evidence" value="ECO:0007669"/>
    <property type="project" value="Ensembl"/>
</dbReference>
<dbReference type="GO" id="GO:0060509">
    <property type="term" value="P:type I pneumocyte differentiation"/>
    <property type="evidence" value="ECO:0007669"/>
    <property type="project" value="Ensembl"/>
</dbReference>
<dbReference type="CDD" id="cd09599">
    <property type="entry name" value="M1_LTA4H"/>
    <property type="match status" value="1"/>
</dbReference>
<dbReference type="FunFam" id="1.10.390.10:FF:000003">
    <property type="entry name" value="Leukotriene A(4) hydrolase"/>
    <property type="match status" value="1"/>
</dbReference>
<dbReference type="FunFam" id="1.25.40.320:FF:000002">
    <property type="entry name" value="Leukotriene A(4) hydrolase"/>
    <property type="match status" value="1"/>
</dbReference>
<dbReference type="FunFam" id="2.60.40.1730:FF:000004">
    <property type="entry name" value="Leukotriene A(4) hydrolase"/>
    <property type="match status" value="1"/>
</dbReference>
<dbReference type="FunFam" id="3.30.2010.30:FF:000001">
    <property type="entry name" value="Leukotriene A(4) hydrolase"/>
    <property type="match status" value="1"/>
</dbReference>
<dbReference type="Gene3D" id="3.30.2010.30">
    <property type="match status" value="1"/>
</dbReference>
<dbReference type="Gene3D" id="1.10.390.10">
    <property type="entry name" value="Neutral Protease Domain 2"/>
    <property type="match status" value="1"/>
</dbReference>
<dbReference type="Gene3D" id="1.25.40.320">
    <property type="entry name" value="Peptidase M1, leukotriene A4 hydrolase/aminopeptidase C-terminal domain"/>
    <property type="match status" value="1"/>
</dbReference>
<dbReference type="Gene3D" id="2.60.40.1730">
    <property type="entry name" value="tricorn interacting facor f3 domain"/>
    <property type="match status" value="1"/>
</dbReference>
<dbReference type="InterPro" id="IPR045357">
    <property type="entry name" value="Aminopeptidase_N-like_N"/>
</dbReference>
<dbReference type="InterPro" id="IPR042097">
    <property type="entry name" value="Aminopeptidase_N-like_N_sf"/>
</dbReference>
<dbReference type="InterPro" id="IPR016024">
    <property type="entry name" value="ARM-type_fold"/>
</dbReference>
<dbReference type="InterPro" id="IPR012777">
    <property type="entry name" value="LTA4H"/>
</dbReference>
<dbReference type="InterPro" id="IPR049980">
    <property type="entry name" value="LTA4H_cat"/>
</dbReference>
<dbReference type="InterPro" id="IPR038502">
    <property type="entry name" value="M1_LTA-4_hydro/amino_C_sf"/>
</dbReference>
<dbReference type="InterPro" id="IPR034015">
    <property type="entry name" value="M1_LTA4H"/>
</dbReference>
<dbReference type="InterPro" id="IPR001930">
    <property type="entry name" value="Peptidase_M1"/>
</dbReference>
<dbReference type="InterPro" id="IPR015211">
    <property type="entry name" value="Peptidase_M1_C"/>
</dbReference>
<dbReference type="InterPro" id="IPR014782">
    <property type="entry name" value="Peptidase_M1_dom"/>
</dbReference>
<dbReference type="InterPro" id="IPR027268">
    <property type="entry name" value="Peptidase_M4/M1_CTD_sf"/>
</dbReference>
<dbReference type="NCBIfam" id="TIGR02411">
    <property type="entry name" value="leuko_A4_hydro"/>
    <property type="match status" value="1"/>
</dbReference>
<dbReference type="PANTHER" id="PTHR45726">
    <property type="entry name" value="LEUKOTRIENE A-4 HYDROLASE"/>
    <property type="match status" value="1"/>
</dbReference>
<dbReference type="PANTHER" id="PTHR45726:SF3">
    <property type="entry name" value="LEUKOTRIENE A-4 HYDROLASE"/>
    <property type="match status" value="1"/>
</dbReference>
<dbReference type="Pfam" id="PF09127">
    <property type="entry name" value="Leuk-A4-hydro_C"/>
    <property type="match status" value="1"/>
</dbReference>
<dbReference type="Pfam" id="PF01433">
    <property type="entry name" value="Peptidase_M1"/>
    <property type="match status" value="1"/>
</dbReference>
<dbReference type="Pfam" id="PF17900">
    <property type="entry name" value="Peptidase_M1_N"/>
    <property type="match status" value="1"/>
</dbReference>
<dbReference type="PRINTS" id="PR00756">
    <property type="entry name" value="ALADIPTASE"/>
</dbReference>
<dbReference type="SMART" id="SM01263">
    <property type="entry name" value="Leuk-A4-hydro_C"/>
    <property type="match status" value="1"/>
</dbReference>
<dbReference type="SUPFAM" id="SSF48371">
    <property type="entry name" value="ARM repeat"/>
    <property type="match status" value="1"/>
</dbReference>
<dbReference type="SUPFAM" id="SSF63737">
    <property type="entry name" value="Leukotriene A4 hydrolase N-terminal domain"/>
    <property type="match status" value="1"/>
</dbReference>
<dbReference type="SUPFAM" id="SSF55486">
    <property type="entry name" value="Metalloproteases ('zincins'), catalytic domain"/>
    <property type="match status" value="1"/>
</dbReference>
<dbReference type="PROSITE" id="PS00142">
    <property type="entry name" value="ZINC_PROTEASE"/>
    <property type="match status" value="1"/>
</dbReference>
<name>LKHA4_HUMAN</name>
<gene>
    <name type="primary">LTA4H</name>
    <name type="synonym">LTA4</name>
</gene>
<accession>P09960</accession>
<accession>B4DNQ9</accession>
<accession>F8VV40</accession>
<accession>Q6IAT6</accession>
<accession>Q9UCT7</accession>
<feature type="initiator methionine" description="Removed" evidence="10 17 74">
    <location>
        <position position="1"/>
    </location>
</feature>
<feature type="chain" id="PRO_0000095124" description="Leukotriene A-4 hydrolase">
    <location>
        <begin position="2"/>
        <end position="611"/>
    </location>
</feature>
<feature type="active site" description="Proton acceptor" evidence="2 24 26 28">
    <location>
        <position position="297"/>
    </location>
</feature>
<feature type="active site" description="Proton donor" evidence="2 24 26 28">
    <location>
        <position position="384"/>
    </location>
</feature>
<feature type="binding site" evidence="8">
    <location>
        <begin position="135"/>
        <end position="137"/>
    </location>
    <ligand>
        <name>a peptide</name>
        <dbReference type="ChEBI" id="CHEBI:60466"/>
    </ligand>
</feature>
<feature type="binding site" evidence="8">
    <location>
        <begin position="267"/>
        <end position="272"/>
    </location>
    <ligand>
        <name>a peptide</name>
        <dbReference type="ChEBI" id="CHEBI:60466"/>
    </ligand>
</feature>
<feature type="binding site" evidence="1 2 3 4 6 8 11 16 27 28 29 30 31 32 33 34 35 36 37 38 39 40 41 42 43 44 45 46 47 48 49 50 51 52 53 54 55 56 57 58 59 60 61 62 63 64 65 66 67 68 69 70 71 72">
    <location>
        <position position="296"/>
    </location>
    <ligand>
        <name>Zn(2+)</name>
        <dbReference type="ChEBI" id="CHEBI:29105"/>
        <note>catalytic</note>
    </ligand>
</feature>
<feature type="binding site" evidence="1 2 3 4 6 8 11 16 27 28 29 30 31 32 33 34 35 36 37 38 39 40 41 42 43 44 45 46 47 48 49 50 51 52 53 54 55 56 57 58 59 60 61 62 63 64 65 66 67 68 69 70 71 72">
    <location>
        <position position="300"/>
    </location>
    <ligand>
        <name>Zn(2+)</name>
        <dbReference type="ChEBI" id="CHEBI:29105"/>
        <note>catalytic</note>
    </ligand>
</feature>
<feature type="binding site" evidence="1 16 27 28 29 30 31 32 33 34 35 36 37 38 39 40 41 42 43 44 45 46 47 48 49 50 51 52 53 54 55 56 57 58 59 60 61 62 63 64 65 66 67 68 69 70 71 72">
    <location>
        <position position="319"/>
    </location>
    <ligand>
        <name>Zn(2+)</name>
        <dbReference type="ChEBI" id="CHEBI:29105"/>
        <note>catalytic</note>
    </ligand>
</feature>
<feature type="binding site" evidence="8">
    <location>
        <begin position="564"/>
        <end position="566"/>
    </location>
    <ligand>
        <name>a peptide</name>
        <dbReference type="ChEBI" id="CHEBI:60466"/>
    </ligand>
</feature>
<feature type="site" description="Pro-Gly-Pro binding" evidence="16">
    <location>
        <position position="272"/>
    </location>
</feature>
<feature type="site" description="Essential for epoxide hydrolase activity, but not for aminopeptidase activity" evidence="3">
    <location>
        <position position="376"/>
    </location>
</feature>
<feature type="site" description="Covalently modified during suicide inhibition by leukotrienes" evidence="18">
    <location>
        <position position="379"/>
    </location>
</feature>
<feature type="site" description="Pro-Gly-Pro binding" evidence="16">
    <location>
        <position position="563"/>
    </location>
</feature>
<feature type="modified residue" description="N6-acetyllysine" evidence="73">
    <location>
        <position position="73"/>
    </location>
</feature>
<feature type="modified residue" description="N6-acetyllysine" evidence="73">
    <location>
        <position position="337"/>
    </location>
</feature>
<feature type="modified residue" description="N6-acetyllysine" evidence="73">
    <location>
        <position position="414"/>
    </location>
</feature>
<feature type="modified residue" description="Phosphoserine" evidence="19">
    <location>
        <position position="416"/>
    </location>
</feature>
<feature type="modified residue" description="N6-acetyllysine" evidence="73">
    <location>
        <position position="573"/>
    </location>
</feature>
<feature type="splice variant" id="VSP_041107" description="In isoform 3 and isoform 4." evidence="20 21">
    <original>MPEIVDTCSLASPASVCRTKHLHLRCSVDFTRRTLTGTAALTVQSQEDNLRSL</original>
    <variation>MLPQRNLSKRQVPTMHIPVKTRRLLAALK</variation>
    <location>
        <begin position="1"/>
        <end position="53"/>
    </location>
</feature>
<feature type="splice variant" id="VSP_041108" description="In isoform 2 and isoform 3." evidence="20">
    <original>APLPLGHIKRMQEVYNFNAINN</original>
    <variation>MAAALHSIQVGGRNSFGAKDGN</variation>
    <location>
        <begin position="511"/>
        <end position="532"/>
    </location>
</feature>
<feature type="splice variant" id="VSP_041109" description="In isoform 2 and isoform 3." evidence="20">
    <location>
        <begin position="533"/>
        <end position="611"/>
    </location>
</feature>
<feature type="sequence variant" id="VAR_051570" description="In dbSNP:rs45630737.">
    <original>Y</original>
    <variation>H</variation>
    <location>
        <position position="131"/>
    </location>
</feature>
<feature type="mutagenesis site" description="Srongly increased epoxide hydrolase activity." evidence="3">
    <original>Q</original>
    <variation>A</variation>
    <variation>L</variation>
    <location>
        <position position="135"/>
    </location>
</feature>
<feature type="mutagenesis site" description="Strongly reduced aminopeptidase activity. Strongly decreased affinity for leukotriene. Abolishes epoxide hydrolase activity." evidence="3">
    <original>Q</original>
    <variation>A</variation>
    <location>
        <position position="135"/>
    </location>
</feature>
<feature type="mutagenesis site" description="No loss of activity." evidence="2">
    <original>Q</original>
    <variation>A</variation>
    <location>
        <position position="137"/>
    </location>
</feature>
<feature type="mutagenesis site" description="Aminopeptidase activity strongly impaired, but keeps LTA4 activity." evidence="2">
    <original>Q</original>
    <variation>L</variation>
    <location>
        <position position="137"/>
    </location>
</feature>
<feature type="mutagenesis site" description="Aminopeptidase activity almost absent, but keeps LTA4 activity." evidence="2">
    <original>Q</original>
    <variation>N</variation>
    <location>
        <position position="137"/>
    </location>
</feature>
<feature type="mutagenesis site" description="Aminopeptidase activity almost absent, but keeps LTA4 activity." evidence="3">
    <original>H</original>
    <variation>Q</variation>
    <location>
        <position position="140"/>
    </location>
</feature>
<feature type="mutagenesis site" description="No loss of activity." evidence="9">
    <original>G</original>
    <variation>A</variation>
    <location>
        <position position="269"/>
    </location>
</feature>
<feature type="mutagenesis site" description="No loss of activity." evidence="2">
    <original>G</original>
    <variation>A</variation>
    <location>
        <position position="270"/>
    </location>
</feature>
<feature type="mutagenesis site" description="No loss of activity." evidence="2">
    <original>M</original>
    <variation>L</variation>
    <location>
        <position position="271"/>
    </location>
</feature>
<feature type="mutagenesis site" description="Complete loss of epoxide hydrolase activity and aminopeptidase activity." evidence="2">
    <original>E</original>
    <variation>A</variation>
    <variation>D</variation>
    <location>
        <position position="272"/>
    </location>
</feature>
<feature type="mutagenesis site" description="Loss of LTA4 hydrolase activity, and aminopeptidase activity strongly impaired." evidence="2">
    <original>E</original>
    <variation>Q</variation>
    <location>
        <position position="272"/>
    </location>
</feature>
<feature type="mutagenesis site" description="No loss of epoxide hydrolase activity and aminopeptidase activity." evidence="2">
    <original>N</original>
    <variation>A</variation>
    <location>
        <position position="273"/>
    </location>
</feature>
<feature type="mutagenesis site" description="Complete loss of LTA4 hydrolase and peptidase enzyme activities." evidence="9">
    <original>H</original>
    <variation>Y</variation>
    <location>
        <position position="296"/>
    </location>
</feature>
<feature type="mutagenesis site" description="Loss of epoxide hydrolase and aminopeptidase activities." evidence="5 7 8">
    <original>E</original>
    <variation>A</variation>
    <location>
        <position position="297"/>
    </location>
</feature>
<feature type="mutagenesis site" description="Loss of epoxide hydrolase and aminopeptidase activities." evidence="5 7 8">
    <original>E</original>
    <variation>K</variation>
    <location>
        <position position="297"/>
    </location>
</feature>
<feature type="mutagenesis site" description="Loss of aminopeptidase activity, but keeps LTA4 hydrolase activity." evidence="5 7 8">
    <original>E</original>
    <variation>Q</variation>
    <location>
        <position position="297"/>
    </location>
</feature>
<feature type="mutagenesis site" description="Complete loss of LTA4 hydrolase and peptidase enzyme activities." evidence="9">
    <original>H</original>
    <variation>L</variation>
    <location>
        <position position="300"/>
    </location>
</feature>
<feature type="mutagenesis site" description="Complete loss of LTA4 hydrolase and peptidase enzyme activities." evidence="9">
    <original>E</original>
    <variation>A</variation>
    <location>
        <position position="319"/>
    </location>
</feature>
<feature type="mutagenesis site" description="No loss of activity." evidence="3">
    <original>D</original>
    <variation>N</variation>
    <location>
        <position position="372"/>
    </location>
</feature>
<feature type="mutagenesis site" description="No loss of activity." evidence="3">
    <original>D</original>
    <variation>N</variation>
    <location>
        <position position="374"/>
    </location>
</feature>
<feature type="mutagenesis site" description="Strongly reduced hydrolysis of peptides starting with Arg. Small effect on hydrolysis of peptides starting with Ala. Abolishes epoxide hydrolase activity." evidence="3 8">
    <original>D</original>
    <variation>A</variation>
    <location>
        <position position="376"/>
    </location>
</feature>
<feature type="mutagenesis site" description="Strongly reduced aminopeptidase activity. Abolishes epoxide hydrolase activity." evidence="3 8">
    <original>D</original>
    <variation>E</variation>
    <location>
        <position position="376"/>
    </location>
</feature>
<feature type="mutagenesis site" description="Abolishes aminopeptidase activity. Decreased epoxide hydrolase activity." evidence="3 8">
    <original>D</original>
    <variation>N</variation>
    <location>
        <position position="376"/>
    </location>
</feature>
<feature type="mutagenesis site" description="Reduced aminopeptidase activity. Minor effect on epoxide hydrolase activity." evidence="3">
    <original>E</original>
    <variation>Q</variation>
    <location>
        <position position="385"/>
    </location>
</feature>
<feature type="mutagenesis site" description="Abolishes epoxide hydrolase activity. Reduced aminopeptidase activity." evidence="6">
    <original>R</original>
    <variation>A</variation>
    <variation>K</variation>
    <variation>M</variation>
    <location>
        <position position="564"/>
    </location>
</feature>
<feature type="mutagenesis site" description="Strongly reduced affinity for peptide substrates. Reduced epoxide hydrolase and aminopeptidase activity." evidence="6">
    <original>K</original>
    <variation>A</variation>
    <variation>M</variation>
    <location>
        <position position="566"/>
    </location>
</feature>
<feature type="mutagenesis site" description="No effect on epoxide hydrolase and aminopeptidase activity." evidence="6">
    <original>K</original>
    <variation>R</variation>
    <location>
        <position position="566"/>
    </location>
</feature>
<feature type="sequence conflict" description="In Ref. 6; BX647158." evidence="22" ref="6">
    <original>A</original>
    <variation>T</variation>
    <location>
        <position position="115"/>
    </location>
</feature>
<feature type="sequence conflict" description="In Ref. 6; BX647158." evidence="22" ref="6">
    <original>Q</original>
    <variation>R</variation>
    <location>
        <position position="123"/>
    </location>
</feature>
<feature type="sequence conflict" description="In Ref. 4; BAG60321." evidence="22" ref="4">
    <original>E</original>
    <variation>G</variation>
    <location>
        <position position="297"/>
    </location>
</feature>
<feature type="sequence conflict" description="In Ref. 6; BX647158." evidence="22" ref="6">
    <original>N</original>
    <variation>S</variation>
    <location>
        <position position="309"/>
    </location>
</feature>
<feature type="sequence conflict" description="In Ref. 6; BX647158." evidence="22" ref="6">
    <original>A</original>
    <variation>V</variation>
    <location>
        <position position="378"/>
    </location>
</feature>
<feature type="turn" evidence="76">
    <location>
        <begin position="14"/>
        <end position="16"/>
    </location>
</feature>
<feature type="strand" evidence="76">
    <location>
        <begin position="17"/>
        <end position="29"/>
    </location>
</feature>
<feature type="turn" evidence="76">
    <location>
        <begin position="30"/>
        <end position="33"/>
    </location>
</feature>
<feature type="strand" evidence="76">
    <location>
        <begin position="34"/>
        <end position="45"/>
    </location>
</feature>
<feature type="strand" evidence="76">
    <location>
        <begin position="50"/>
        <end position="59"/>
    </location>
</feature>
<feature type="strand" evidence="76">
    <location>
        <begin position="61"/>
        <end position="67"/>
    </location>
</feature>
<feature type="strand" evidence="76">
    <location>
        <begin position="74"/>
        <end position="76"/>
    </location>
</feature>
<feature type="helix" evidence="76">
    <location>
        <begin position="81"/>
        <end position="83"/>
    </location>
</feature>
<feature type="strand" evidence="76">
    <location>
        <begin position="85"/>
        <end position="95"/>
    </location>
</feature>
<feature type="strand" evidence="76">
    <location>
        <begin position="100"/>
        <end position="108"/>
    </location>
</feature>
<feature type="strand" evidence="76">
    <location>
        <begin position="116"/>
        <end position="119"/>
    </location>
</feature>
<feature type="helix" evidence="76">
    <location>
        <begin position="121"/>
        <end position="123"/>
    </location>
</feature>
<feature type="strand" evidence="76">
    <location>
        <begin position="124"/>
        <end position="129"/>
    </location>
</feature>
<feature type="strand" evidence="76">
    <location>
        <begin position="131"/>
        <end position="134"/>
    </location>
</feature>
<feature type="turn" evidence="76">
    <location>
        <begin position="137"/>
        <end position="140"/>
    </location>
</feature>
<feature type="helix" evidence="76">
    <location>
        <begin position="141"/>
        <end position="143"/>
    </location>
</feature>
<feature type="strand" evidence="76">
    <location>
        <begin position="155"/>
        <end position="164"/>
    </location>
</feature>
<feature type="strand" evidence="76">
    <location>
        <begin position="167"/>
        <end position="180"/>
    </location>
</feature>
<feature type="strand" evidence="75">
    <location>
        <begin position="182"/>
        <end position="184"/>
    </location>
</feature>
<feature type="strand" evidence="76">
    <location>
        <begin position="187"/>
        <end position="198"/>
    </location>
</feature>
<feature type="helix" evidence="76">
    <location>
        <begin position="200"/>
        <end position="202"/>
    </location>
</feature>
<feature type="strand" evidence="76">
    <location>
        <begin position="205"/>
        <end position="209"/>
    </location>
</feature>
<feature type="strand" evidence="76">
    <location>
        <begin position="211"/>
        <end position="216"/>
    </location>
</feature>
<feature type="strand" evidence="76">
    <location>
        <begin position="219"/>
        <end position="223"/>
    </location>
</feature>
<feature type="helix" evidence="76">
    <location>
        <begin position="225"/>
        <end position="227"/>
    </location>
</feature>
<feature type="helix" evidence="76">
    <location>
        <begin position="228"/>
        <end position="234"/>
    </location>
</feature>
<feature type="turn" evidence="76">
    <location>
        <begin position="235"/>
        <end position="237"/>
    </location>
</feature>
<feature type="helix" evidence="76">
    <location>
        <begin position="238"/>
        <end position="249"/>
    </location>
</feature>
<feature type="strand" evidence="77">
    <location>
        <begin position="253"/>
        <end position="255"/>
    </location>
</feature>
<feature type="strand" evidence="76">
    <location>
        <begin position="258"/>
        <end position="261"/>
    </location>
</feature>
<feature type="strand" evidence="76">
    <location>
        <begin position="267"/>
        <end position="271"/>
    </location>
</feature>
<feature type="strand" evidence="76">
    <location>
        <begin position="276"/>
        <end position="279"/>
    </location>
</feature>
<feature type="helix" evidence="76">
    <location>
        <begin position="281"/>
        <end position="283"/>
    </location>
</feature>
<feature type="strand" evidence="76">
    <location>
        <begin position="286"/>
        <end position="288"/>
    </location>
</feature>
<feature type="turn" evidence="76">
    <location>
        <begin position="289"/>
        <end position="291"/>
    </location>
</feature>
<feature type="helix" evidence="76">
    <location>
        <begin position="292"/>
        <end position="299"/>
    </location>
</feature>
<feature type="turn" evidence="76">
    <location>
        <begin position="300"/>
        <end position="302"/>
    </location>
</feature>
<feature type="turn" evidence="76">
    <location>
        <begin position="304"/>
        <end position="306"/>
    </location>
</feature>
<feature type="strand" evidence="76">
    <location>
        <begin position="307"/>
        <end position="311"/>
    </location>
</feature>
<feature type="helix" evidence="76">
    <location>
        <begin position="312"/>
        <end position="314"/>
    </location>
</feature>
<feature type="helix" evidence="76">
    <location>
        <begin position="315"/>
        <end position="334"/>
    </location>
</feature>
<feature type="helix" evidence="76">
    <location>
        <begin position="336"/>
        <end position="357"/>
    </location>
</feature>
<feature type="helix" evidence="76">
    <location>
        <begin position="362"/>
        <end position="364"/>
    </location>
</feature>
<feature type="strand" evidence="76">
    <location>
        <begin position="365"/>
        <end position="367"/>
    </location>
</feature>
<feature type="helix" evidence="76">
    <location>
        <begin position="375"/>
        <end position="378"/>
    </location>
</feature>
<feature type="helix" evidence="76">
    <location>
        <begin position="382"/>
        <end position="398"/>
    </location>
</feature>
<feature type="helix" evidence="76">
    <location>
        <begin position="401"/>
        <end position="415"/>
    </location>
</feature>
<feature type="strand" evidence="76">
    <location>
        <begin position="418"/>
        <end position="420"/>
    </location>
</feature>
<feature type="helix" evidence="76">
    <location>
        <begin position="422"/>
        <end position="432"/>
    </location>
</feature>
<feature type="helix" evidence="76">
    <location>
        <begin position="434"/>
        <end position="436"/>
    </location>
</feature>
<feature type="helix" evidence="76">
    <location>
        <begin position="437"/>
        <end position="441"/>
    </location>
</feature>
<feature type="helix" evidence="76">
    <location>
        <begin position="445"/>
        <end position="450"/>
    </location>
</feature>
<feature type="turn" evidence="76">
    <location>
        <begin position="464"/>
        <end position="466"/>
    </location>
</feature>
<feature type="helix" evidence="76">
    <location>
        <begin position="467"/>
        <end position="478"/>
    </location>
</feature>
<feature type="helix" evidence="76">
    <location>
        <begin position="481"/>
        <end position="486"/>
    </location>
</feature>
<feature type="helix" evidence="76">
    <location>
        <begin position="489"/>
        <end position="492"/>
    </location>
</feature>
<feature type="helix" evidence="76">
    <location>
        <begin position="497"/>
        <end position="508"/>
    </location>
</feature>
<feature type="helix" evidence="76">
    <location>
        <begin position="515"/>
        <end position="525"/>
    </location>
</feature>
<feature type="helix" evidence="76">
    <location>
        <begin position="527"/>
        <end position="529"/>
    </location>
</feature>
<feature type="helix" evidence="76">
    <location>
        <begin position="533"/>
        <end position="545"/>
    </location>
</feature>
<feature type="helix" evidence="76">
    <location>
        <begin position="551"/>
        <end position="561"/>
    </location>
</feature>
<feature type="helix" evidence="76">
    <location>
        <begin position="565"/>
        <end position="577"/>
    </location>
</feature>
<feature type="helix" evidence="76">
    <location>
        <begin position="579"/>
        <end position="592"/>
    </location>
</feature>
<feature type="helix" evidence="76">
    <location>
        <begin position="593"/>
        <end position="595"/>
    </location>
</feature>
<feature type="helix" evidence="76">
    <location>
        <begin position="598"/>
        <end position="608"/>
    </location>
</feature>
<comment type="function">
    <text evidence="3 4 6 8 10 12 13 14 15 16">Bifunctional zinc metalloenzyme that comprises both epoxide hydrolase (EH) and aminopeptidase activities. Acts as an epoxide hydrolase to catalyze the conversion of LTA4 to the pro-inflammatory mediator leukotriene B4 (LTB4) (PubMed:11917124, PubMed:12207002, PubMed:15078870, PubMed:18804029, PubMed:1897988, PubMed:1975494, PubMed:2244921). Also has aminopeptidase activity, with high affinity for N-terminal arginines of various synthetic tripeptides (PubMed:18804029, PubMed:20813919). In addition to its pro-inflammatory EH activity, may also counteract inflammation by its aminopeptidase activity, which inactivates by cleavage another neutrophil attractant, the tripeptide Pro-Gly-Pro (PGP), a bioactive fragment of collagen generated by the action of matrix metalloproteinase-9 (MMP9) and prolylendopeptidase (PREPL) (PubMed:20813919, PubMed:24591641). Involved also in the biosynthesis of resolvin E1 and 18S-resolvin E1 from eicosapentaenoic acid, two lipid mediators that show potent anti-inflammatory and pro-resolving actions (PubMed:21206090).</text>
</comment>
<comment type="catalytic activity">
    <reaction evidence="2 3 4 6 8 10 16 17 18 19">
        <text>leukotriene A4 + H2O = leukotriene B4</text>
        <dbReference type="Rhea" id="RHEA:22324"/>
        <dbReference type="ChEBI" id="CHEBI:15377"/>
        <dbReference type="ChEBI" id="CHEBI:57461"/>
        <dbReference type="ChEBI" id="CHEBI:57463"/>
        <dbReference type="EC" id="3.3.2.6"/>
    </reaction>
    <physiologicalReaction direction="left-to-right" evidence="23">
        <dbReference type="Rhea" id="RHEA:22325"/>
    </physiologicalReaction>
</comment>
<comment type="catalytic activity">
    <reaction evidence="14">
        <text>(5S,6S)-epoxy-(18R)-hydroxy-(7E,9E,11Z,14Z,16E)-eicosapentaenoate + H2O = resolvin E1</text>
        <dbReference type="Rhea" id="RHEA:50272"/>
        <dbReference type="ChEBI" id="CHEBI:15377"/>
        <dbReference type="ChEBI" id="CHEBI:91000"/>
        <dbReference type="ChEBI" id="CHEBI:132219"/>
    </reaction>
    <physiologicalReaction direction="left-to-right" evidence="25">
        <dbReference type="Rhea" id="RHEA:50273"/>
    </physiologicalReaction>
</comment>
<comment type="catalytic activity">
    <reaction evidence="14">
        <text>(5S,6S)-epoxy-(18S)-hydroxy-(7E,9E,11Z,14Z,16E)-eicosapentaenoate + H2O = 18S-resolvin E1</text>
        <dbReference type="Rhea" id="RHEA:51988"/>
        <dbReference type="ChEBI" id="CHEBI:15377"/>
        <dbReference type="ChEBI" id="CHEBI:134661"/>
        <dbReference type="ChEBI" id="CHEBI:136057"/>
    </reaction>
    <physiologicalReaction direction="left-to-right" evidence="25">
        <dbReference type="Rhea" id="RHEA:51989"/>
    </physiologicalReaction>
</comment>
<comment type="catalytic activity">
    <reaction evidence="2 3 13 16 19">
        <text>Release of the N-terminal residue from a tripeptide.</text>
        <dbReference type="EC" id="3.4.11.4"/>
    </reaction>
</comment>
<comment type="cofactor">
    <cofactor evidence="1 4 6 8 16">
        <name>Zn(2+)</name>
        <dbReference type="ChEBI" id="CHEBI:29105"/>
    </cofactor>
    <text evidence="4 6 8">Binds 1 zinc ion per subunit.</text>
</comment>
<comment type="activity regulation">
    <text evidence="1 16 18">Inhibited by bestatin (PubMed:11175901). The epoxide hydrolase activity is restrained by suicide inactivation that involves binding of LTA4 to Tyr-379 (PubMed:7667299). 4-(4-benzylphenyl)thiazol-2-amine (ARM1) selectively inhibits the epoxide hydrolase activity (PubMed:24591641).</text>
</comment>
<comment type="biophysicochemical properties">
    <kinetics>
        <KM evidence="13">1.29 mM for Pro-Gly-Pro</KM>
    </kinetics>
</comment>
<comment type="pathway">
    <text evidence="3">Lipid metabolism; leukotriene B4 biosynthesis.</text>
</comment>
<comment type="subunit">
    <text evidence="3 4 6">Monomer.</text>
</comment>
<comment type="interaction">
    <interactant intactId="EBI-721089">
        <id>P09960</id>
    </interactant>
    <interactant intactId="EBI-717399">
        <id>Q9BSI4</id>
        <label>TINF2</label>
    </interactant>
    <organismsDiffer>false</organismsDiffer>
    <experiments>2</experiments>
</comment>
<comment type="subcellular location">
    <subcellularLocation>
        <location evidence="17">Cytoplasm</location>
    </subcellularLocation>
</comment>
<comment type="alternative products">
    <event type="alternative splicing"/>
    <isoform>
        <id>P09960-1</id>
        <name>1</name>
        <name>L-LTA4</name>
        <sequence type="displayed"/>
    </isoform>
    <isoform>
        <id>P09960-2</id>
        <name>2</name>
        <name>S-LTA4</name>
        <sequence type="described" ref="VSP_041108 VSP_041109"/>
    </isoform>
    <isoform>
        <id>P09960-3</id>
        <name>3</name>
        <sequence type="described" ref="VSP_041107 VSP_041108 VSP_041109"/>
    </isoform>
    <isoform>
        <id>P09960-4</id>
        <name>4</name>
        <sequence type="described" ref="VSP_041107"/>
    </isoform>
</comment>
<comment type="tissue specificity">
    <text>Isoform 1 and isoform 2 are expressed in monocytes, lymphocytes, neutrophils, reticulocytes, platelets and fibroblasts.</text>
</comment>
<comment type="PTM">
    <text evidence="19">Phosphorylation at Ser-416 inhibits leukotriene-A4 hydrolase activity.</text>
</comment>
<comment type="similarity">
    <text evidence="22">Belongs to the peptidase M1 family.</text>
</comment>
<proteinExistence type="evidence at protein level"/>
<keyword id="KW-0002">3D-structure</keyword>
<keyword id="KW-0007">Acetylation</keyword>
<keyword id="KW-0025">Alternative splicing</keyword>
<keyword id="KW-0963">Cytoplasm</keyword>
<keyword id="KW-0903">Direct protein sequencing</keyword>
<keyword id="KW-0378">Hydrolase</keyword>
<keyword id="KW-0434">Leukotriene biosynthesis</keyword>
<keyword id="KW-0443">Lipid metabolism</keyword>
<keyword id="KW-0479">Metal-binding</keyword>
<keyword id="KW-0482">Metalloprotease</keyword>
<keyword id="KW-0597">Phosphoprotein</keyword>
<keyword id="KW-0645">Protease</keyword>
<keyword id="KW-1267">Proteomics identification</keyword>
<keyword id="KW-1185">Reference proteome</keyword>
<keyword id="KW-0862">Zinc</keyword>
<sequence>MPEIVDTCSLASPASVCRTKHLHLRCSVDFTRRTLTGTAALTVQSQEDNLRSLVLDTKDLTIEKVVINGQEVKYALGERQSYKGSPMEISLPIALSKNQEIVIEISFETSPKSSALQWLTPEQTSGKEHPYLFSQCQAIHCRAILPCQDTPSVKLTYTAEVSVPKELVALMSAIRDGETPDPEDPSRKIYKFIQKVPIPCYLIALVVGALESRQIGPRTLVWSEKEQVEKSAYEFSETESMLKIAEDLGGPYVWGQYDLLVLPPSFPYGGMENPCLTFVTPTLLAGDKSLSNVIAHEISHSWTGNLVTNKTWDHFWLNEGHTVYLERHICGRLFGEKFRHFNALGGWGELQNSVKTFGETHPFTKLVVDLTDIDPDVAYSSVPYEKGFALLFYLEQLLGGPEIFLGFLKAYVEKFSYKSITTDDWKDFLYSYFKDKVDVLNQVDWNAWLYSPGLPPIKPNYDMTLTNACIALSQRWITAKEDDLNSFNATDLKDLSSHQLNEFLAQTLQRAPLPLGHIKRMQEVYNFNAINNSEIRFRWLRLCIQSKWEDAIPLALKMATEQGRMKFTRPLFKDLAAFDKSHDQAVRTYQEHKASMHPVTAMLVGKDLKVD</sequence>
<protein>
    <recommendedName>
        <fullName>Leukotriene A-4 hydrolase</fullName>
        <shortName>LTA-4 hydrolase</shortName>
        <ecNumber evidence="3 4 6 8 9 10 17 18">3.3.2.6</ecNumber>
    </recommendedName>
    <alternativeName>
        <fullName>Leukotriene A(4) hydrolase</fullName>
    </alternativeName>
    <alternativeName>
        <fullName evidence="22">Tripeptide aminopeptidase LTA4H</fullName>
        <ecNumber evidence="2 3 13 16 19">3.4.11.4</ecNumber>
    </alternativeName>
</protein>
<organism>
    <name type="scientific">Homo sapiens</name>
    <name type="common">Human</name>
    <dbReference type="NCBI Taxonomy" id="9606"/>
    <lineage>
        <taxon>Eukaryota</taxon>
        <taxon>Metazoa</taxon>
        <taxon>Chordata</taxon>
        <taxon>Craniata</taxon>
        <taxon>Vertebrata</taxon>
        <taxon>Euteleostomi</taxon>
        <taxon>Mammalia</taxon>
        <taxon>Eutheria</taxon>
        <taxon>Euarchontoglires</taxon>
        <taxon>Primates</taxon>
        <taxon>Haplorrhini</taxon>
        <taxon>Catarrhini</taxon>
        <taxon>Hominidae</taxon>
        <taxon>Homo</taxon>
    </lineage>
</organism>
<reference key="1">
    <citation type="journal article" date="1987" name="J. Biol. Chem.">
        <title>Molecular cloning of a cDNA coding for human leukotriene A4 hydrolase. Complete primary structure of an enzyme involved in eicosanoid synthesis.</title>
        <authorList>
            <person name="Minami M."/>
            <person name="Ohno S."/>
            <person name="Kawasaki H."/>
            <person name="Raedmark O."/>
            <person name="Samuelsson B."/>
            <person name="Joernvall H."/>
            <person name="Shimizu T."/>
            <person name="Seyama Y."/>
            <person name="Suzuki K."/>
        </authorList>
    </citation>
    <scope>NUCLEOTIDE SEQUENCE [MRNA] (ISOFORM 1)</scope>
</reference>
<reference key="2">
    <citation type="journal article" date="1987" name="Proc. Natl. Acad. Sci. U.S.A.">
        <title>Molecular cloning and amino acid sequence of leukotriene A4 hydrolase.</title>
        <authorList>
            <person name="Funk C.D."/>
            <person name="Raadmark O."/>
            <person name="Fu J.Y."/>
            <person name="Matsumoto T."/>
            <person name="Joernvall H."/>
            <person name="Shimizu T."/>
            <person name="Samuelsson B."/>
        </authorList>
    </citation>
    <scope>NUCLEOTIDE SEQUENCE [MRNA] (ISOFORM 1)</scope>
    <scope>PARTIAL PROTEIN SEQUENCE</scope>
</reference>
<reference key="3">
    <citation type="journal article" date="1995" name="Eur. J. Biochem.">
        <title>Cloning and characterization of the human leukotriene A4 hydrolase gene.</title>
        <authorList>
            <person name="Mancini J.A."/>
            <person name="Evans J.F."/>
        </authorList>
    </citation>
    <scope>NUCLEOTIDE SEQUENCE [GENOMIC DNA]</scope>
</reference>
<reference key="4">
    <citation type="journal article" date="2004" name="Nat. Genet.">
        <title>Complete sequencing and characterization of 21,243 full-length human cDNAs.</title>
        <authorList>
            <person name="Ota T."/>
            <person name="Suzuki Y."/>
            <person name="Nishikawa T."/>
            <person name="Otsuki T."/>
            <person name="Sugiyama T."/>
            <person name="Irie R."/>
            <person name="Wakamatsu A."/>
            <person name="Hayashi K."/>
            <person name="Sato H."/>
            <person name="Nagai K."/>
            <person name="Kimura K."/>
            <person name="Makita H."/>
            <person name="Sekine M."/>
            <person name="Obayashi M."/>
            <person name="Nishi T."/>
            <person name="Shibahara T."/>
            <person name="Tanaka T."/>
            <person name="Ishii S."/>
            <person name="Yamamoto J."/>
            <person name="Saito K."/>
            <person name="Kawai Y."/>
            <person name="Isono Y."/>
            <person name="Nakamura Y."/>
            <person name="Nagahari K."/>
            <person name="Murakami K."/>
            <person name="Yasuda T."/>
            <person name="Iwayanagi T."/>
            <person name="Wagatsuma M."/>
            <person name="Shiratori A."/>
            <person name="Sudo H."/>
            <person name="Hosoiri T."/>
            <person name="Kaku Y."/>
            <person name="Kodaira H."/>
            <person name="Kondo H."/>
            <person name="Sugawara M."/>
            <person name="Takahashi M."/>
            <person name="Kanda K."/>
            <person name="Yokoi T."/>
            <person name="Furuya T."/>
            <person name="Kikkawa E."/>
            <person name="Omura Y."/>
            <person name="Abe K."/>
            <person name="Kamihara K."/>
            <person name="Katsuta N."/>
            <person name="Sato K."/>
            <person name="Tanikawa M."/>
            <person name="Yamazaki M."/>
            <person name="Ninomiya K."/>
            <person name="Ishibashi T."/>
            <person name="Yamashita H."/>
            <person name="Murakawa K."/>
            <person name="Fujimori K."/>
            <person name="Tanai H."/>
            <person name="Kimata M."/>
            <person name="Watanabe M."/>
            <person name="Hiraoka S."/>
            <person name="Chiba Y."/>
            <person name="Ishida S."/>
            <person name="Ono Y."/>
            <person name="Takiguchi S."/>
            <person name="Watanabe S."/>
            <person name="Yosida M."/>
            <person name="Hotuta T."/>
            <person name="Kusano J."/>
            <person name="Kanehori K."/>
            <person name="Takahashi-Fujii A."/>
            <person name="Hara H."/>
            <person name="Tanase T.-O."/>
            <person name="Nomura Y."/>
            <person name="Togiya S."/>
            <person name="Komai F."/>
            <person name="Hara R."/>
            <person name="Takeuchi K."/>
            <person name="Arita M."/>
            <person name="Imose N."/>
            <person name="Musashino K."/>
            <person name="Yuuki H."/>
            <person name="Oshima A."/>
            <person name="Sasaki N."/>
            <person name="Aotsuka S."/>
            <person name="Yoshikawa Y."/>
            <person name="Matsunawa H."/>
            <person name="Ichihara T."/>
            <person name="Shiohata N."/>
            <person name="Sano S."/>
            <person name="Moriya S."/>
            <person name="Momiyama H."/>
            <person name="Satoh N."/>
            <person name="Takami S."/>
            <person name="Terashima Y."/>
            <person name="Suzuki O."/>
            <person name="Nakagawa S."/>
            <person name="Senoh A."/>
            <person name="Mizoguchi H."/>
            <person name="Goto Y."/>
            <person name="Shimizu F."/>
            <person name="Wakebe H."/>
            <person name="Hishigaki H."/>
            <person name="Watanabe T."/>
            <person name="Sugiyama A."/>
            <person name="Takemoto M."/>
            <person name="Kawakami B."/>
            <person name="Yamazaki M."/>
            <person name="Watanabe K."/>
            <person name="Kumagai A."/>
            <person name="Itakura S."/>
            <person name="Fukuzumi Y."/>
            <person name="Fujimori Y."/>
            <person name="Komiyama M."/>
            <person name="Tashiro H."/>
            <person name="Tanigami A."/>
            <person name="Fujiwara T."/>
            <person name="Ono T."/>
            <person name="Yamada K."/>
            <person name="Fujii Y."/>
            <person name="Ozaki K."/>
            <person name="Hirao M."/>
            <person name="Ohmori Y."/>
            <person name="Kawabata A."/>
            <person name="Hikiji T."/>
            <person name="Kobatake N."/>
            <person name="Inagaki H."/>
            <person name="Ikema Y."/>
            <person name="Okamoto S."/>
            <person name="Okitani R."/>
            <person name="Kawakami T."/>
            <person name="Noguchi S."/>
            <person name="Itoh T."/>
            <person name="Shigeta K."/>
            <person name="Senba T."/>
            <person name="Matsumura K."/>
            <person name="Nakajima Y."/>
            <person name="Mizuno T."/>
            <person name="Morinaga M."/>
            <person name="Sasaki M."/>
            <person name="Togashi T."/>
            <person name="Oyama M."/>
            <person name="Hata H."/>
            <person name="Watanabe M."/>
            <person name="Komatsu T."/>
            <person name="Mizushima-Sugano J."/>
            <person name="Satoh T."/>
            <person name="Shirai Y."/>
            <person name="Takahashi Y."/>
            <person name="Nakagawa K."/>
            <person name="Okumura K."/>
            <person name="Nagase T."/>
            <person name="Nomura N."/>
            <person name="Kikuchi H."/>
            <person name="Masuho Y."/>
            <person name="Yamashita R."/>
            <person name="Nakai K."/>
            <person name="Yada T."/>
            <person name="Nakamura Y."/>
            <person name="Ohara O."/>
            <person name="Isogai T."/>
            <person name="Sugano S."/>
        </authorList>
    </citation>
    <scope>NUCLEOTIDE SEQUENCE [LARGE SCALE MRNA] (ISOFORM 3)</scope>
    <source>
        <tissue>Lung</tissue>
    </source>
</reference>
<reference key="5">
    <citation type="submission" date="2004-06" db="EMBL/GenBank/DDBJ databases">
        <title>Cloning of human full open reading frames in Gateway(TM) system entry vector (pDONR201).</title>
        <authorList>
            <person name="Ebert L."/>
            <person name="Schick M."/>
            <person name="Neubert P."/>
            <person name="Schatten R."/>
            <person name="Henze S."/>
            <person name="Korn B."/>
        </authorList>
    </citation>
    <scope>NUCLEOTIDE SEQUENCE [LARGE SCALE MRNA] (ISOFORM 1)</scope>
</reference>
<reference key="6">
    <citation type="journal article" date="2007" name="BMC Genomics">
        <title>The full-ORF clone resource of the German cDNA consortium.</title>
        <authorList>
            <person name="Bechtel S."/>
            <person name="Rosenfelder H."/>
            <person name="Duda A."/>
            <person name="Schmidt C.P."/>
            <person name="Ernst U."/>
            <person name="Wellenreuther R."/>
            <person name="Mehrle A."/>
            <person name="Schuster C."/>
            <person name="Bahr A."/>
            <person name="Bloecker H."/>
            <person name="Heubner D."/>
            <person name="Hoerlein A."/>
            <person name="Michel G."/>
            <person name="Wedler H."/>
            <person name="Koehrer K."/>
            <person name="Ottenwaelder B."/>
            <person name="Poustka A."/>
            <person name="Wiemann S."/>
            <person name="Schupp I."/>
        </authorList>
    </citation>
    <scope>NUCLEOTIDE SEQUENCE [LARGE SCALE MRNA] (ISOFORM 4)</scope>
    <source>
        <tissue>Esophageal carcinoma</tissue>
    </source>
</reference>
<reference key="7">
    <citation type="journal article" date="2006" name="Nature">
        <title>The finished DNA sequence of human chromosome 12.</title>
        <authorList>
            <person name="Scherer S.E."/>
            <person name="Muzny D.M."/>
            <person name="Buhay C.J."/>
            <person name="Chen R."/>
            <person name="Cree A."/>
            <person name="Ding Y."/>
            <person name="Dugan-Rocha S."/>
            <person name="Gill R."/>
            <person name="Gunaratne P."/>
            <person name="Harris R.A."/>
            <person name="Hawes A.C."/>
            <person name="Hernandez J."/>
            <person name="Hodgson A.V."/>
            <person name="Hume J."/>
            <person name="Jackson A."/>
            <person name="Khan Z.M."/>
            <person name="Kovar-Smith C."/>
            <person name="Lewis L.R."/>
            <person name="Lozado R.J."/>
            <person name="Metzker M.L."/>
            <person name="Milosavljevic A."/>
            <person name="Miner G.R."/>
            <person name="Montgomery K.T."/>
            <person name="Morgan M.B."/>
            <person name="Nazareth L.V."/>
            <person name="Scott G."/>
            <person name="Sodergren E."/>
            <person name="Song X.-Z."/>
            <person name="Steffen D."/>
            <person name="Lovering R.C."/>
            <person name="Wheeler D.A."/>
            <person name="Worley K.C."/>
            <person name="Yuan Y."/>
            <person name="Zhang Z."/>
            <person name="Adams C.Q."/>
            <person name="Ansari-Lari M.A."/>
            <person name="Ayele M."/>
            <person name="Brown M.J."/>
            <person name="Chen G."/>
            <person name="Chen Z."/>
            <person name="Clerc-Blankenburg K.P."/>
            <person name="Davis C."/>
            <person name="Delgado O."/>
            <person name="Dinh H.H."/>
            <person name="Draper H."/>
            <person name="Gonzalez-Garay M.L."/>
            <person name="Havlak P."/>
            <person name="Jackson L.R."/>
            <person name="Jacob L.S."/>
            <person name="Kelly S.H."/>
            <person name="Li L."/>
            <person name="Li Z."/>
            <person name="Liu J."/>
            <person name="Liu W."/>
            <person name="Lu J."/>
            <person name="Maheshwari M."/>
            <person name="Nguyen B.-V."/>
            <person name="Okwuonu G.O."/>
            <person name="Pasternak S."/>
            <person name="Perez L.M."/>
            <person name="Plopper F.J.H."/>
            <person name="Santibanez J."/>
            <person name="Shen H."/>
            <person name="Tabor P.E."/>
            <person name="Verduzco D."/>
            <person name="Waldron L."/>
            <person name="Wang Q."/>
            <person name="Williams G.A."/>
            <person name="Zhang J."/>
            <person name="Zhou J."/>
            <person name="Allen C.C."/>
            <person name="Amin A.G."/>
            <person name="Anyalebechi V."/>
            <person name="Bailey M."/>
            <person name="Barbaria J.A."/>
            <person name="Bimage K.E."/>
            <person name="Bryant N.P."/>
            <person name="Burch P.E."/>
            <person name="Burkett C.E."/>
            <person name="Burrell K.L."/>
            <person name="Calderon E."/>
            <person name="Cardenas V."/>
            <person name="Carter K."/>
            <person name="Casias K."/>
            <person name="Cavazos I."/>
            <person name="Cavazos S.R."/>
            <person name="Ceasar H."/>
            <person name="Chacko J."/>
            <person name="Chan S.N."/>
            <person name="Chavez D."/>
            <person name="Christopoulos C."/>
            <person name="Chu J."/>
            <person name="Cockrell R."/>
            <person name="Cox C.D."/>
            <person name="Dang M."/>
            <person name="Dathorne S.R."/>
            <person name="David R."/>
            <person name="Davis C.M."/>
            <person name="Davy-Carroll L."/>
            <person name="Deshazo D.R."/>
            <person name="Donlin J.E."/>
            <person name="D'Souza L."/>
            <person name="Eaves K.A."/>
            <person name="Egan A."/>
            <person name="Emery-Cohen A.J."/>
            <person name="Escotto M."/>
            <person name="Flagg N."/>
            <person name="Forbes L.D."/>
            <person name="Gabisi A.M."/>
            <person name="Garza M."/>
            <person name="Hamilton C."/>
            <person name="Henderson N."/>
            <person name="Hernandez O."/>
            <person name="Hines S."/>
            <person name="Hogues M.E."/>
            <person name="Huang M."/>
            <person name="Idlebird D.G."/>
            <person name="Johnson R."/>
            <person name="Jolivet A."/>
            <person name="Jones S."/>
            <person name="Kagan R."/>
            <person name="King L.M."/>
            <person name="Leal B."/>
            <person name="Lebow H."/>
            <person name="Lee S."/>
            <person name="LeVan J.M."/>
            <person name="Lewis L.C."/>
            <person name="London P."/>
            <person name="Lorensuhewa L.M."/>
            <person name="Loulseged H."/>
            <person name="Lovett D.A."/>
            <person name="Lucier A."/>
            <person name="Lucier R.L."/>
            <person name="Ma J."/>
            <person name="Madu R.C."/>
            <person name="Mapua P."/>
            <person name="Martindale A.D."/>
            <person name="Martinez E."/>
            <person name="Massey E."/>
            <person name="Mawhiney S."/>
            <person name="Meador M.G."/>
            <person name="Mendez S."/>
            <person name="Mercado C."/>
            <person name="Mercado I.C."/>
            <person name="Merritt C.E."/>
            <person name="Miner Z.L."/>
            <person name="Minja E."/>
            <person name="Mitchell T."/>
            <person name="Mohabbat F."/>
            <person name="Mohabbat K."/>
            <person name="Montgomery B."/>
            <person name="Moore N."/>
            <person name="Morris S."/>
            <person name="Munidasa M."/>
            <person name="Ngo R.N."/>
            <person name="Nguyen N.B."/>
            <person name="Nickerson E."/>
            <person name="Nwaokelemeh O.O."/>
            <person name="Nwokenkwo S."/>
            <person name="Obregon M."/>
            <person name="Oguh M."/>
            <person name="Oragunye N."/>
            <person name="Oviedo R.J."/>
            <person name="Parish B.J."/>
            <person name="Parker D.N."/>
            <person name="Parrish J."/>
            <person name="Parks K.L."/>
            <person name="Paul H.A."/>
            <person name="Payton B.A."/>
            <person name="Perez A."/>
            <person name="Perrin W."/>
            <person name="Pickens A."/>
            <person name="Primus E.L."/>
            <person name="Pu L.-L."/>
            <person name="Puazo M."/>
            <person name="Quiles M.M."/>
            <person name="Quiroz J.B."/>
            <person name="Rabata D."/>
            <person name="Reeves K."/>
            <person name="Ruiz S.J."/>
            <person name="Shao H."/>
            <person name="Sisson I."/>
            <person name="Sonaike T."/>
            <person name="Sorelle R.P."/>
            <person name="Sutton A.E."/>
            <person name="Svatek A.F."/>
            <person name="Svetz L.A."/>
            <person name="Tamerisa K.S."/>
            <person name="Taylor T.R."/>
            <person name="Teague B."/>
            <person name="Thomas N."/>
            <person name="Thorn R.D."/>
            <person name="Trejos Z.Y."/>
            <person name="Trevino B.K."/>
            <person name="Ukegbu O.N."/>
            <person name="Urban J.B."/>
            <person name="Vasquez L.I."/>
            <person name="Vera V.A."/>
            <person name="Villasana D.M."/>
            <person name="Wang L."/>
            <person name="Ward-Moore S."/>
            <person name="Warren J.T."/>
            <person name="Wei X."/>
            <person name="White F."/>
            <person name="Williamson A.L."/>
            <person name="Wleczyk R."/>
            <person name="Wooden H.S."/>
            <person name="Wooden S.H."/>
            <person name="Yen J."/>
            <person name="Yoon L."/>
            <person name="Yoon V."/>
            <person name="Zorrilla S.E."/>
            <person name="Nelson D."/>
            <person name="Kucherlapati R."/>
            <person name="Weinstock G."/>
            <person name="Gibbs R.A."/>
        </authorList>
    </citation>
    <scope>NUCLEOTIDE SEQUENCE [LARGE SCALE GENOMIC DNA]</scope>
</reference>
<reference key="8">
    <citation type="submission" date="2005-07" db="EMBL/GenBank/DDBJ databases">
        <authorList>
            <person name="Mural R.J."/>
            <person name="Istrail S."/>
            <person name="Sutton G.G."/>
            <person name="Florea L."/>
            <person name="Halpern A.L."/>
            <person name="Mobarry C.M."/>
            <person name="Lippert R."/>
            <person name="Walenz B."/>
            <person name="Shatkay H."/>
            <person name="Dew I."/>
            <person name="Miller J.R."/>
            <person name="Flanigan M.J."/>
            <person name="Edwards N.J."/>
            <person name="Bolanos R."/>
            <person name="Fasulo D."/>
            <person name="Halldorsson B.V."/>
            <person name="Hannenhalli S."/>
            <person name="Turner R."/>
            <person name="Yooseph S."/>
            <person name="Lu F."/>
            <person name="Nusskern D.R."/>
            <person name="Shue B.C."/>
            <person name="Zheng X.H."/>
            <person name="Zhong F."/>
            <person name="Delcher A.L."/>
            <person name="Huson D.H."/>
            <person name="Kravitz S.A."/>
            <person name="Mouchard L."/>
            <person name="Reinert K."/>
            <person name="Remington K.A."/>
            <person name="Clark A.G."/>
            <person name="Waterman M.S."/>
            <person name="Eichler E.E."/>
            <person name="Adams M.D."/>
            <person name="Hunkapiller M.W."/>
            <person name="Myers E.W."/>
            <person name="Venter J.C."/>
        </authorList>
    </citation>
    <scope>NUCLEOTIDE SEQUENCE [LARGE SCALE GENOMIC DNA]</scope>
</reference>
<reference key="9">
    <citation type="journal article" date="2004" name="Genome Res.">
        <title>The status, quality, and expansion of the NIH full-length cDNA project: the Mammalian Gene Collection (MGC).</title>
        <authorList>
            <consortium name="The MGC Project Team"/>
        </authorList>
    </citation>
    <scope>NUCLEOTIDE SEQUENCE [LARGE SCALE MRNA] (ISOFORM 1)</scope>
    <source>
        <tissue>Eye</tissue>
    </source>
</reference>
<reference key="10">
    <citation type="journal article" date="1991" name="Arch. Biochem. Biophys.">
        <title>Leukotriene A4 hydrolase in the human B-lymphocytic cell line Raji: indications of catalytically divergent forms of the enzyme.</title>
        <authorList>
            <person name="Odlander B."/>
            <person name="Claesson H.E."/>
            <person name="Bergman T."/>
            <person name="Radmark O."/>
            <person name="Joernvall H."/>
            <person name="Haeggstrom J.Z."/>
        </authorList>
    </citation>
    <scope>PROTEIN SEQUENCE OF 2-22</scope>
    <scope>FUNCTION</scope>
    <scope>CATALYTIC ACTIVITY</scope>
    <source>
        <tissue>B-cell</tissue>
    </source>
</reference>
<reference key="11">
    <citation type="journal article" date="1984" name="J. Biol. Chem.">
        <title>Leukotriene A4 hydrolase in human leukocytes. Purification and properties.</title>
        <authorList>
            <person name="Radmark O."/>
            <person name="Shimizu T."/>
            <person name="Joernvall H."/>
            <person name="Samuelsson B."/>
        </authorList>
    </citation>
    <scope>PROTEIN SEQUENCE OF 2-16</scope>
    <scope>SUBCELLULAR LOCATION</scope>
    <scope>CATALYTIC ACTIVITY</scope>
    <scope>FUNCTION</scope>
</reference>
<reference key="12">
    <citation type="journal article" date="1995" name="Proc. Natl. Acad. Sci. U.S.A.">
        <title>Leukotriene A4 hydrolase: mapping of a henicosapeptide involved in mechanism-based inactivation.</title>
        <authorList>
            <person name="Mueller M.J."/>
            <person name="Wetterholm A."/>
            <person name="Blomster M."/>
            <person name="Jornvall H."/>
            <person name="Samuelsson B."/>
            <person name="Haeggstrom J.Z."/>
        </authorList>
    </citation>
    <scope>PROTEIN SEQUENCE OF 366-386</scope>
    <scope>ACTIVITY REGULATION</scope>
    <scope>COVALENT MODIFICATION AT TYR-379</scope>
    <scope>CATALYTIC ACTIVITY</scope>
</reference>
<reference key="13">
    <citation type="journal article" date="1996" name="Biochem. J.">
        <title>The human leukotriene A4 hydrolase gene is expressed in two alternatively spliced mRNA forms.</title>
        <authorList>
            <person name="Jendraschak E."/>
            <person name="Kaminski W.E."/>
            <person name="Kiefl R."/>
            <person name="von Schacky C."/>
        </authorList>
    </citation>
    <scope>NUCLEOTIDE SEQUENCE [GENOMIC DNA] OF 511-611</scope>
    <scope>ALTERNATIVE SPLICING (ISOFORMS 1 AND 2)</scope>
</reference>
<reference key="14">
    <citation type="journal article" date="1990" name="Biochem. Biophys. Res. Commun.">
        <title>Molecular evolution and zinc ion binding motif of leukotriene A4 hydrolase.</title>
        <authorList>
            <person name="Toh H."/>
            <person name="Minami M."/>
            <person name="Shimizu T."/>
        </authorList>
    </citation>
    <scope>ZINC-BINDING</scope>
    <scope>FUNCTION</scope>
    <scope>CATALYTIC ACTIVITY</scope>
</reference>
<reference key="15">
    <citation type="journal article" date="1990" name="Biochem. Biophys. Res. Commun.">
        <title>Leukotriene A4 hydrolase: a zinc metalloenzyme.</title>
        <authorList>
            <person name="Haeggstroem J.Z."/>
            <person name="Wetterholm A."/>
            <person name="Shapiro R."/>
            <person name="Vallee B.L."/>
            <person name="Samuelsson B."/>
        </authorList>
    </citation>
    <scope>ZINC-BINDING</scope>
    <scope>FUNCTION</scope>
    <scope>CATALYTIC ACTIVITY</scope>
</reference>
<reference key="16">
    <citation type="journal article" date="1991" name="Proc. Natl. Acad. Sci. U.S.A.">
        <title>Leukotriene A4 hydrolase: determination of the three zinc-binding ligands by site-directed mutagenesis and zinc analysis.</title>
        <authorList>
            <person name="Medina J.F."/>
            <person name="Wetterholm A."/>
            <person name="Raadmark O."/>
            <person name="Shapiro R."/>
            <person name="Haeggstroem J.Z."/>
            <person name="Vallee B.L."/>
            <person name="Samuelsson B."/>
        </authorList>
    </citation>
    <scope>CATALYTIC ACTIVITY</scope>
    <scope>MUTAGENESIS OF GLY-269; HIS-296; HIS-300 AND GLU-319</scope>
</reference>
<reference key="17">
    <citation type="journal article" date="1992" name="FEBS Lett.">
        <title>Leukotriene A4 hydrolase, a bifunctional enzyme. Distinction of leukotriene A4 hydrolase and aminopeptidase activities by site-directed mutagenesis at Glu-297.</title>
        <authorList>
            <person name="Minami M."/>
            <person name="Bito H."/>
            <person name="Ohishi N."/>
            <person name="Tsuge H."/>
            <person name="Miyano M."/>
            <person name="Mori M."/>
            <person name="Wada H."/>
            <person name="Mutoh H."/>
            <person name="Shimada S."/>
            <person name="Izumi T."/>
            <person name="Abe K."/>
            <person name="Shimuzu T."/>
        </authorList>
    </citation>
    <scope>MUTAGENESIS OF GLU-297</scope>
</reference>
<reference key="18">
    <citation type="journal article" date="1992" name="Proc. Natl. Acad. Sci. U.S.A.">
        <title>Leukotriene A4 hydrolase: abrogation of the peptidase activity by mutation of glutamic acid-296.</title>
        <authorList>
            <person name="Wetterholm A."/>
            <person name="Medina J.F."/>
            <person name="Raadmark O."/>
            <person name="Shapiro R."/>
            <person name="Haeggstroem J.Z."/>
            <person name="Vallee B.L."/>
            <person name="Samuelsson B."/>
        </authorList>
    </citation>
    <scope>MUTAGENESIS OF GLU-297</scope>
</reference>
<reference key="19">
    <citation type="journal article" date="1997" name="J. Biol. Chem.">
        <title>Regulation of leukotriene A4 hydrolase activity in endothelial cells by phosphorylation.</title>
        <authorList>
            <person name="Rybina I.V."/>
            <person name="Liu H."/>
            <person name="Gor Y."/>
            <person name="Feinmark S.J."/>
        </authorList>
    </citation>
    <scope>PHOSPHORYLATION AT SER-416</scope>
    <scope>CATALYTIC ACTIVITY</scope>
    <scope>ACTIVITY REGULATION</scope>
</reference>
<reference key="20">
    <citation type="journal article" date="2009" name="Science">
        <title>Lysine acetylation targets protein complexes and co-regulates major cellular functions.</title>
        <authorList>
            <person name="Choudhary C."/>
            <person name="Kumar C."/>
            <person name="Gnad F."/>
            <person name="Nielsen M.L."/>
            <person name="Rehman M."/>
            <person name="Walther T.C."/>
            <person name="Olsen J.V."/>
            <person name="Mann M."/>
        </authorList>
    </citation>
    <scope>ACETYLATION [LARGE SCALE ANALYSIS] AT LYS-73; LYS-337; LYS-414 AND LYS-573</scope>
    <scope>IDENTIFICATION BY MASS SPECTROMETRY [LARGE SCALE ANALYSIS]</scope>
</reference>
<reference key="21">
    <citation type="journal article" date="2010" name="Science">
        <title>A critical role for LTA4H in limiting chronic pulmonary neutrophilic inflammation.</title>
        <authorList>
            <person name="Snelgrove R.J."/>
            <person name="Jackson P.L."/>
            <person name="Hardison M.T."/>
            <person name="Noerager B.D."/>
            <person name="Kinloch A."/>
            <person name="Gaggar A."/>
            <person name="Shastry S."/>
            <person name="Rowe S.M."/>
            <person name="Shim Y.M."/>
            <person name="Hussell T."/>
            <person name="Blalock J.E."/>
        </authorList>
    </citation>
    <scope>CATALYTIC ACTIVITY</scope>
    <scope>FUNCTION</scope>
    <scope>BIOPHYSICOCHEMICAL PROPERTIES</scope>
</reference>
<reference key="22">
    <citation type="journal article" date="2011" name="BMC Syst. Biol.">
        <title>Initial characterization of the human central proteome.</title>
        <authorList>
            <person name="Burkard T.R."/>
            <person name="Planyavsky M."/>
            <person name="Kaupe I."/>
            <person name="Breitwieser F.P."/>
            <person name="Buerckstuemmer T."/>
            <person name="Bennett K.L."/>
            <person name="Superti-Furga G."/>
            <person name="Colinge J."/>
        </authorList>
    </citation>
    <scope>IDENTIFICATION BY MASS SPECTROMETRY [LARGE SCALE ANALYSIS]</scope>
</reference>
<reference key="23">
    <citation type="journal article" date="2012" name="Mol. Cell. Proteomics">
        <title>Comparative large-scale characterisation of plant vs. mammal proteins reveals similar and idiosyncratic N-alpha acetylation features.</title>
        <authorList>
            <person name="Bienvenut W.V."/>
            <person name="Sumpton D."/>
            <person name="Martinez A."/>
            <person name="Lilla S."/>
            <person name="Espagne C."/>
            <person name="Meinnel T."/>
            <person name="Giglione C."/>
        </authorList>
    </citation>
    <scope>CLEAVAGE OF INITIATOR METHIONINE [LARGE SCALE ANALYSIS]</scope>
    <scope>IDENTIFICATION BY MASS SPECTROMETRY [LARGE SCALE ANALYSIS]</scope>
</reference>
<reference key="24">
    <citation type="journal article" date="2012" name="Proc. Natl. Acad. Sci. U.S.A.">
        <title>N-terminal acetylome analyses and functional insights of the N-terminal acetyltransferase NatB.</title>
        <authorList>
            <person name="Van Damme P."/>
            <person name="Lasa M."/>
            <person name="Polevoda B."/>
            <person name="Gazquez C."/>
            <person name="Elosegui-Artola A."/>
            <person name="Kim D.S."/>
            <person name="De Juan-Pardo E."/>
            <person name="Demeyer K."/>
            <person name="Hole K."/>
            <person name="Larrea E."/>
            <person name="Timmerman E."/>
            <person name="Prieto J."/>
            <person name="Arnesen T."/>
            <person name="Sherman F."/>
            <person name="Gevaert K."/>
            <person name="Aldabe R."/>
        </authorList>
    </citation>
    <scope>IDENTIFICATION BY MASS SPECTROMETRY [LARGE SCALE ANALYSIS]</scope>
</reference>
<reference key="25">
    <citation type="journal article" date="2014" name="J. Proteomics">
        <title>An enzyme assisted RP-RPLC approach for in-depth analysis of human liver phosphoproteome.</title>
        <authorList>
            <person name="Bian Y."/>
            <person name="Song C."/>
            <person name="Cheng K."/>
            <person name="Dong M."/>
            <person name="Wang F."/>
            <person name="Huang J."/>
            <person name="Sun D."/>
            <person name="Wang L."/>
            <person name="Ye M."/>
            <person name="Zou H."/>
        </authorList>
    </citation>
    <scope>IDENTIFICATION BY MASS SPECTROMETRY [LARGE SCALE ANALYSIS]</scope>
    <source>
        <tissue>Liver</tissue>
    </source>
</reference>
<reference key="26">
    <citation type="journal article" date="2011" name="J. Clin. Invest.">
        <title>Pro-resolving actions and stereoselective biosynthesis of 18S E-series resolvins in human leukocytes and murine inflammation.</title>
        <authorList>
            <person name="Oh S.F."/>
            <person name="Pillai P.S."/>
            <person name="Recchiuti A."/>
            <person name="Yang R."/>
            <person name="Serhan C.N."/>
        </authorList>
    </citation>
    <scope>CATALYTIC ACTIVITY</scope>
    <scope>FUNCTION</scope>
</reference>
<reference key="27">
    <citation type="journal article" date="2001" name="Nat. Struct. Biol.">
        <title>Crystal structure of human leukotriene A(4) hydrolase, a bifunctional enzyme in inflammation.</title>
        <authorList>
            <person name="Thunnissen M.M.G.M."/>
            <person name="Nordlund P."/>
            <person name="Haeggstroem J.Z."/>
        </authorList>
    </citation>
    <scope>X-RAY CRYSTALLOGRAPHY (1.95 ANGSTROMS) IN COMPLEX WITH ZINC AND BESTATIN</scope>
</reference>
<reference key="28">
    <citation type="journal article" date="2002" name="FASEB J.">
        <title>Crystal structures of leukotriene A4 hydrolase in complex with captopril and two competitive tight-binding inhibitors.</title>
        <authorList>
            <person name="Thunnissen M.M."/>
            <person name="Andersson B."/>
            <person name="Samuelsson B."/>
            <person name="Wong C.H."/>
            <person name="Haeggstrom J.Z."/>
        </authorList>
    </citation>
    <scope>X-RAY CRYSTALLOGRAPHY (1.8 ANGSTROMS) IN COMPLEX WITH CAPTOPRIL AND ZINC IONS</scope>
    <scope>FUNCTION</scope>
    <scope>COFACTOR</scope>
    <scope>CATALYTIC ACTIVITY</scope>
    <scope>ACTIVE SITE</scope>
</reference>
<reference key="29">
    <citation type="journal article" date="2002" name="J. Biol. Chem.">
        <title>Leukotriene A4 hydrolase/aminopeptidase. Glutamate 271 is a catalytic residue with specific roles in two distinct enzyme mechanisms.</title>
        <authorList>
            <person name="Rudberg P.C."/>
            <person name="Tholander F."/>
            <person name="Thunnissen M.M.G.M."/>
            <person name="Haeggstroem J.Z."/>
        </authorList>
    </citation>
    <scope>X-RAY CRYSTALLOGRAPHY (2.1 ANGSTROMS) OF 2-611 IN COMPLEX WITH ZINC</scope>
    <scope>ACTIVE SITE</scope>
    <scope>MUTAGENESIS OF GLN-137; GLY-270; MET-271; GLU-272 AND ASN-273</scope>
    <scope>CATALYTIC ACTIVITY</scope>
    <scope>FUNCTION</scope>
</reference>
<reference key="30">
    <citation type="journal article" date="2002" name="Proc. Natl. Acad. Sci. U.S.A.">
        <title>Leukotriene A4 hydrolase: selective abrogation of leukotriene B4 formation by mutation of aspartic acid 375.</title>
        <authorList>
            <person name="Rudberg P.C."/>
            <person name="Tholander F."/>
            <person name="Thunnissen M.M."/>
            <person name="Samuelsson B."/>
            <person name="Haeggstrom J.Z."/>
        </authorList>
    </citation>
    <scope>X-RAY CRYSTALLOGRAPHY (2.2 ANGSTROMS) OF MUTANT ASN-376 IN COMPLEX WITH BESTATIN AND ZINC IONS</scope>
    <scope>FUNCTION</scope>
    <scope>CATALYTIC ACTIVITY</scope>
    <scope>MUTAGENESIS OF GLN-135; HIS-140; ASP-372; ASP-374; ASP-376 AND GLU-385</scope>
</reference>
<reference key="31">
    <citation type="journal article" date="2004" name="J. Biol. Chem.">
        <title>Leukotriene A4 hydrolase: identification of a common carboxylate recognition site for the epoxide hydrolase and aminopeptidase substrates.</title>
        <authorList>
            <person name="Rudberg P.C."/>
            <person name="Tholander F."/>
            <person name="Andberg M."/>
            <person name="Thunnissen M.M."/>
            <person name="Haeggstrom J.Z."/>
        </authorList>
    </citation>
    <scope>X-RAY CRYSTALLOGRAPHY (2.3 ANGSTROMS) OF MUTANT ALA-564 IN COMPLEX WITH ZINC IONS</scope>
    <scope>CATALYTIC ACTIVITY</scope>
    <scope>FUNCTION</scope>
    <scope>COFACTOR</scope>
    <scope>MUTAGENESIS OF ARG-564 AND LYS-566</scope>
</reference>
<reference key="32">
    <citation type="journal article" date="2008" name="Chem. Biol.">
        <title>Structure-based dissection of the active site chemistry of leukotriene A4 hydrolase: implications for M1 aminopeptidases and inhibitor design.</title>
        <authorList>
            <person name="Tholander F."/>
            <person name="Muroya A."/>
            <person name="Roques B.P."/>
            <person name="Fournie-Zaluski M.C."/>
            <person name="Thunnissen M.M."/>
            <person name="Haeggstrom J.Z."/>
        </authorList>
    </citation>
    <scope>X-RAY CRYSTALLOGRAPHY (1.47 ANGSTROMS) OF MUTANT GLN-297 IN COMPLEXES WITH SUBSTRATE TRIPEPTIDES AND ZINC IONS</scope>
    <scope>CATALYTIC ACTIVITY</scope>
    <scope>FUNCTION</scope>
    <scope>COFACTOR</scope>
    <scope>MUTAGENESIS OF GLU-297 AND ASP-376</scope>
</reference>
<reference key="33">
    <citation type="journal article" date="2009" name="J. Med. Chem.">
        <title>Discovery of leukotriene A4 hydrolase inhibitors using metabolomics biased fragment crystallography.</title>
        <authorList>
            <person name="Davies D.R."/>
            <person name="Mamat B."/>
            <person name="Magnusson O.T."/>
            <person name="Christensen J."/>
            <person name="Haraldsson M.H."/>
            <person name="Mishra R."/>
            <person name="Pease B."/>
            <person name="Hansen E."/>
            <person name="Singh J."/>
            <person name="Zembower D."/>
            <person name="Kim H."/>
            <person name="Kiselyov A.S."/>
            <person name="Burgin A.B."/>
            <person name="Gurney M.E."/>
            <person name="Stewart L.J."/>
        </authorList>
    </citation>
    <scope>X-RAY CRYSTALLOGRAPHY (1.58 ANGSTROMS) IN COMPLEXES WITH INHIBITORS AND ZINC IONS</scope>
</reference>
<reference evidence="69 70 71" key="34">
    <citation type="journal article" date="2014" name="Proc. Natl. Acad. Sci. U.S.A.">
        <title>Binding of Pro-Gly-Pro at the active site of leukotriene A4 hydrolase/aminopeptidase and development of an epoxide hydrolase selective inhibitor.</title>
        <authorList>
            <person name="Stsiapanava A."/>
            <person name="Olsson U."/>
            <person name="Wan M."/>
            <person name="Kleinschmidt T."/>
            <person name="Rutishauser D."/>
            <person name="Zubarev R.A."/>
            <person name="Samuelsson B."/>
            <person name="Rinaldo-Matthis A."/>
            <person name="Haeggstrom J.Z."/>
        </authorList>
    </citation>
    <scope>X-RAY CRYSTALLOGRAPHY (1.62 ANGSTROMS) IN COMPLEX WITH PRO-GLY-PRO ANALOG 4-(4-BENZYLPHENYL)THIAZOL-2-AMINE AND ZINC IONS</scope>
    <scope>CATALYTIC ACTIVITY</scope>
    <scope>FUNCTION</scope>
</reference>
<evidence type="ECO:0000269" key="1">
    <source>
    </source>
</evidence>
<evidence type="ECO:0000269" key="2">
    <source>
    </source>
</evidence>
<evidence type="ECO:0000269" key="3">
    <source>
    </source>
</evidence>
<evidence type="ECO:0000269" key="4">
    <source>
    </source>
</evidence>
<evidence type="ECO:0000269" key="5">
    <source>
    </source>
</evidence>
<evidence type="ECO:0000269" key="6">
    <source>
    </source>
</evidence>
<evidence type="ECO:0000269" key="7">
    <source>
    </source>
</evidence>
<evidence type="ECO:0000269" key="8">
    <source>
    </source>
</evidence>
<evidence type="ECO:0000269" key="9">
    <source>
    </source>
</evidence>
<evidence type="ECO:0000269" key="10">
    <source>
    </source>
</evidence>
<evidence type="ECO:0000269" key="11">
    <source>
    </source>
</evidence>
<evidence type="ECO:0000269" key="12">
    <source>
    </source>
</evidence>
<evidence type="ECO:0000269" key="13">
    <source>
    </source>
</evidence>
<evidence type="ECO:0000269" key="14">
    <source>
    </source>
</evidence>
<evidence type="ECO:0000269" key="15">
    <source>
    </source>
</evidence>
<evidence type="ECO:0000269" key="16">
    <source>
    </source>
</evidence>
<evidence type="ECO:0000269" key="17">
    <source>
    </source>
</evidence>
<evidence type="ECO:0000269" key="18">
    <source>
    </source>
</evidence>
<evidence type="ECO:0000269" key="19">
    <source>
    </source>
</evidence>
<evidence type="ECO:0000303" key="20">
    <source>
    </source>
</evidence>
<evidence type="ECO:0000303" key="21">
    <source>
    </source>
</evidence>
<evidence type="ECO:0000305" key="22"/>
<evidence type="ECO:0000305" key="23">
    <source>
    </source>
</evidence>
<evidence type="ECO:0000305" key="24">
    <source>
    </source>
</evidence>
<evidence type="ECO:0000305" key="25">
    <source>
    </source>
</evidence>
<evidence type="ECO:0000305" key="26">
    <source>
    </source>
</evidence>
<evidence type="ECO:0007744" key="27">
    <source>
        <dbReference type="PDB" id="1GW6"/>
    </source>
</evidence>
<evidence type="ECO:0007744" key="28">
    <source>
        <dbReference type="PDB" id="1H19"/>
    </source>
</evidence>
<evidence type="ECO:0007744" key="29">
    <source>
        <dbReference type="PDB" id="1HS6"/>
    </source>
</evidence>
<evidence type="ECO:0007744" key="30">
    <source>
        <dbReference type="PDB" id="1SQM"/>
    </source>
</evidence>
<evidence type="ECO:0007744" key="31">
    <source>
        <dbReference type="PDB" id="2R59"/>
    </source>
</evidence>
<evidence type="ECO:0007744" key="32">
    <source>
        <dbReference type="PDB" id="2VJ8"/>
    </source>
</evidence>
<evidence type="ECO:0007744" key="33">
    <source>
        <dbReference type="PDB" id="3B7R"/>
    </source>
</evidence>
<evidence type="ECO:0007744" key="34">
    <source>
        <dbReference type="PDB" id="3B7S"/>
    </source>
</evidence>
<evidence type="ECO:0007744" key="35">
    <source>
        <dbReference type="PDB" id="3B7T"/>
    </source>
</evidence>
<evidence type="ECO:0007744" key="36">
    <source>
        <dbReference type="PDB" id="3B7U"/>
    </source>
</evidence>
<evidence type="ECO:0007744" key="37">
    <source>
        <dbReference type="PDB" id="3CHO"/>
    </source>
</evidence>
<evidence type="ECO:0007744" key="38">
    <source>
        <dbReference type="PDB" id="3CHP"/>
    </source>
</evidence>
<evidence type="ECO:0007744" key="39">
    <source>
        <dbReference type="PDB" id="3CHQ"/>
    </source>
</evidence>
<evidence type="ECO:0007744" key="40">
    <source>
        <dbReference type="PDB" id="3CHR"/>
    </source>
</evidence>
<evidence type="ECO:0007744" key="41">
    <source>
        <dbReference type="PDB" id="3CHS"/>
    </source>
</evidence>
<evidence type="ECO:0007744" key="42">
    <source>
        <dbReference type="PDB" id="3FH5"/>
    </source>
</evidence>
<evidence type="ECO:0007744" key="43">
    <source>
        <dbReference type="PDB" id="3FH7"/>
    </source>
</evidence>
<evidence type="ECO:0007744" key="44">
    <source>
        <dbReference type="PDB" id="3FH8"/>
    </source>
</evidence>
<evidence type="ECO:0007744" key="45">
    <source>
        <dbReference type="PDB" id="3FHE"/>
    </source>
</evidence>
<evidence type="ECO:0007744" key="46">
    <source>
        <dbReference type="PDB" id="3FTS"/>
    </source>
</evidence>
<evidence type="ECO:0007744" key="47">
    <source>
        <dbReference type="PDB" id="3FTU"/>
    </source>
</evidence>
<evidence type="ECO:0007744" key="48">
    <source>
        <dbReference type="PDB" id="3FTV"/>
    </source>
</evidence>
<evidence type="ECO:0007744" key="49">
    <source>
        <dbReference type="PDB" id="3FTW"/>
    </source>
</evidence>
<evidence type="ECO:0007744" key="50">
    <source>
        <dbReference type="PDB" id="3FTX"/>
    </source>
</evidence>
<evidence type="ECO:0007744" key="51">
    <source>
        <dbReference type="PDB" id="3FTY"/>
    </source>
</evidence>
<evidence type="ECO:0007744" key="52">
    <source>
        <dbReference type="PDB" id="3FTZ"/>
    </source>
</evidence>
<evidence type="ECO:0007744" key="53">
    <source>
        <dbReference type="PDB" id="3FU0"/>
    </source>
</evidence>
<evidence type="ECO:0007744" key="54">
    <source>
        <dbReference type="PDB" id="3FU3"/>
    </source>
</evidence>
<evidence type="ECO:0007744" key="55">
    <source>
        <dbReference type="PDB" id="3FU5"/>
    </source>
</evidence>
<evidence type="ECO:0007744" key="56">
    <source>
        <dbReference type="PDB" id="3FU6"/>
    </source>
</evidence>
<evidence type="ECO:0007744" key="57">
    <source>
        <dbReference type="PDB" id="3FUD"/>
    </source>
</evidence>
<evidence type="ECO:0007744" key="58">
    <source>
        <dbReference type="PDB" id="3FUE"/>
    </source>
</evidence>
<evidence type="ECO:0007744" key="59">
    <source>
        <dbReference type="PDB" id="3FUF"/>
    </source>
</evidence>
<evidence type="ECO:0007744" key="60">
    <source>
        <dbReference type="PDB" id="3FUH"/>
    </source>
</evidence>
<evidence type="ECO:0007744" key="61">
    <source>
        <dbReference type="PDB" id="3FUI"/>
    </source>
</evidence>
<evidence type="ECO:0007744" key="62">
    <source>
        <dbReference type="PDB" id="3FUJ"/>
    </source>
</evidence>
<evidence type="ECO:0007744" key="63">
    <source>
        <dbReference type="PDB" id="3FUK"/>
    </source>
</evidence>
<evidence type="ECO:0007744" key="64">
    <source>
        <dbReference type="PDB" id="3FUL"/>
    </source>
</evidence>
<evidence type="ECO:0007744" key="65">
    <source>
        <dbReference type="PDB" id="3FUM"/>
    </source>
</evidence>
<evidence type="ECO:0007744" key="66">
    <source>
        <dbReference type="PDB" id="3FUN"/>
    </source>
</evidence>
<evidence type="ECO:0007744" key="67">
    <source>
        <dbReference type="PDB" id="3U9W"/>
    </source>
</evidence>
<evidence type="ECO:0007744" key="68">
    <source>
        <dbReference type="PDB" id="4DPR"/>
    </source>
</evidence>
<evidence type="ECO:0007744" key="69">
    <source>
        <dbReference type="PDB" id="4L2L"/>
    </source>
</evidence>
<evidence type="ECO:0007744" key="70">
    <source>
        <dbReference type="PDB" id="4MKT"/>
    </source>
</evidence>
<evidence type="ECO:0007744" key="71">
    <source>
        <dbReference type="PDB" id="4MS6"/>
    </source>
</evidence>
<evidence type="ECO:0007744" key="72">
    <source>
        <dbReference type="PDB" id="5AEN"/>
    </source>
</evidence>
<evidence type="ECO:0007744" key="73">
    <source>
    </source>
</evidence>
<evidence type="ECO:0007744" key="74">
    <source>
    </source>
</evidence>
<evidence type="ECO:0007829" key="75">
    <source>
        <dbReference type="PDB" id="2VJ8"/>
    </source>
</evidence>
<evidence type="ECO:0007829" key="76">
    <source>
        <dbReference type="PDB" id="3U9W"/>
    </source>
</evidence>
<evidence type="ECO:0007829" key="77">
    <source>
        <dbReference type="PDB" id="5NIE"/>
    </source>
</evidence>